<accession>Q60841</accession>
<accession>E9PZ78</accession>
<accession>Q9CUA6</accession>
<dbReference type="EC" id="3.4.21.-" evidence="7"/>
<dbReference type="EMBL" id="U24703">
    <property type="protein sequence ID" value="AAB91599.1"/>
    <property type="molecule type" value="mRNA"/>
</dbReference>
<dbReference type="EMBL" id="AC113028">
    <property type="status" value="NOT_ANNOTATED_CDS"/>
    <property type="molecule type" value="Genomic_DNA"/>
</dbReference>
<dbReference type="EMBL" id="AC116404">
    <property type="status" value="NOT_ANNOTATED_CDS"/>
    <property type="molecule type" value="Genomic_DNA"/>
</dbReference>
<dbReference type="EMBL" id="AC119906">
    <property type="status" value="NOT_ANNOTATED_CDS"/>
    <property type="molecule type" value="Genomic_DNA"/>
</dbReference>
<dbReference type="EMBL" id="AC121878">
    <property type="status" value="NOT_ANNOTATED_CDS"/>
    <property type="molecule type" value="Genomic_DNA"/>
</dbReference>
<dbReference type="EMBL" id="D63520">
    <property type="protein sequence ID" value="BAA09788.1"/>
    <property type="status" value="ALT_INIT"/>
    <property type="molecule type" value="mRNA"/>
</dbReference>
<dbReference type="EMBL" id="AK017094">
    <property type="protein sequence ID" value="BAB30592.1"/>
    <property type="molecule type" value="mRNA"/>
</dbReference>
<dbReference type="CCDS" id="CCDS39023.1">
    <molecule id="Q60841-1"/>
</dbReference>
<dbReference type="CCDS" id="CCDS80217.1">
    <molecule id="Q60841-2"/>
</dbReference>
<dbReference type="PIR" id="S58870">
    <property type="entry name" value="S58870"/>
</dbReference>
<dbReference type="RefSeq" id="NP_001297393.1">
    <molecule id="Q60841-2"/>
    <property type="nucleotide sequence ID" value="NM_001310464.1"/>
</dbReference>
<dbReference type="RefSeq" id="NP_035391.2">
    <molecule id="Q60841-1"/>
    <property type="nucleotide sequence ID" value="NM_011261.2"/>
</dbReference>
<dbReference type="PDB" id="2DDU">
    <property type="method" value="X-ray"/>
    <property type="resolution" value="2.05 A"/>
    <property type="chains" value="A=1222-1597"/>
</dbReference>
<dbReference type="PDB" id="2E26">
    <property type="method" value="X-ray"/>
    <property type="resolution" value="2.00 A"/>
    <property type="chains" value="A=1948-2661"/>
</dbReference>
<dbReference type="PDB" id="3A7Q">
    <property type="method" value="X-ray"/>
    <property type="resolution" value="2.60 A"/>
    <property type="chains" value="A=1948-2661"/>
</dbReference>
<dbReference type="PDB" id="5B4X">
    <property type="method" value="X-ray"/>
    <property type="resolution" value="3.20 A"/>
    <property type="chains" value="A/C=1948-2662"/>
</dbReference>
<dbReference type="PDB" id="6A48">
    <property type="method" value="X-ray"/>
    <property type="resolution" value="2.00 A"/>
    <property type="chains" value="A=195-864"/>
</dbReference>
<dbReference type="PDB" id="7LYU">
    <property type="method" value="X-ray"/>
    <property type="resolution" value="3.00 A"/>
    <property type="chains" value="A/B=3052-3455"/>
</dbReference>
<dbReference type="PDBsum" id="2DDU"/>
<dbReference type="PDBsum" id="2E26"/>
<dbReference type="PDBsum" id="3A7Q"/>
<dbReference type="PDBsum" id="5B4X"/>
<dbReference type="PDBsum" id="6A48"/>
<dbReference type="PDBsum" id="7LYU"/>
<dbReference type="SMR" id="Q60841"/>
<dbReference type="BioGRID" id="202855">
    <property type="interactions" value="14"/>
</dbReference>
<dbReference type="ComplexPortal" id="CPX-4524">
    <property type="entry name" value="Reelin complex"/>
</dbReference>
<dbReference type="DIP" id="DIP-40924N"/>
<dbReference type="FunCoup" id="Q60841">
    <property type="interactions" value="595"/>
</dbReference>
<dbReference type="IntAct" id="Q60841">
    <property type="interactions" value="6"/>
</dbReference>
<dbReference type="STRING" id="10090.ENSMUSP00000124052"/>
<dbReference type="GlyConnect" id="2678">
    <property type="glycosylation" value="6 N-Linked glycans (2 sites)"/>
</dbReference>
<dbReference type="GlyCosmos" id="Q60841">
    <property type="glycosylation" value="20 sites, 6 glycans"/>
</dbReference>
<dbReference type="GlyGen" id="Q60841">
    <property type="glycosylation" value="20 sites, 12 N-linked glycans (8 sites)"/>
</dbReference>
<dbReference type="iPTMnet" id="Q60841"/>
<dbReference type="PhosphoSitePlus" id="Q60841"/>
<dbReference type="jPOST" id="Q60841"/>
<dbReference type="PaxDb" id="10090-ENSMUSP00000124052"/>
<dbReference type="PeptideAtlas" id="Q60841"/>
<dbReference type="ProteomicsDB" id="253205">
    <molecule id="Q60841-1"/>
</dbReference>
<dbReference type="ProteomicsDB" id="253206">
    <molecule id="Q60841-2"/>
</dbReference>
<dbReference type="ProteomicsDB" id="253207">
    <molecule id="Q60841-3"/>
</dbReference>
<dbReference type="Antibodypedia" id="3876">
    <property type="antibodies" value="216 antibodies from 29 providers"/>
</dbReference>
<dbReference type="DNASU" id="19699"/>
<dbReference type="Ensembl" id="ENSMUST00000062372.14">
    <molecule id="Q60841-2"/>
    <property type="protein sequence ID" value="ENSMUSP00000058025.8"/>
    <property type="gene ID" value="ENSMUSG00000042453.15"/>
</dbReference>
<dbReference type="Ensembl" id="ENSMUST00000161356.8">
    <molecule id="Q60841-1"/>
    <property type="protein sequence ID" value="ENSMUSP00000124052.2"/>
    <property type="gene ID" value="ENSMUSG00000042453.15"/>
</dbReference>
<dbReference type="GeneID" id="19699"/>
<dbReference type="KEGG" id="mmu:19699"/>
<dbReference type="UCSC" id="uc008wpi.1">
    <molecule id="Q60841-1"/>
    <property type="organism name" value="mouse"/>
</dbReference>
<dbReference type="AGR" id="MGI:103022"/>
<dbReference type="CTD" id="5649"/>
<dbReference type="MGI" id="MGI:103022">
    <property type="gene designation" value="Reln"/>
</dbReference>
<dbReference type="VEuPathDB" id="HostDB:ENSMUSG00000042453"/>
<dbReference type="eggNOG" id="ENOG502QSIP">
    <property type="taxonomic scope" value="Eukaryota"/>
</dbReference>
<dbReference type="GeneTree" id="ENSGT00580000081623"/>
<dbReference type="HOGENOM" id="CLU_000468_0_0_1"/>
<dbReference type="InParanoid" id="Q60841"/>
<dbReference type="OMA" id="ATIKHAC"/>
<dbReference type="OrthoDB" id="1924787at2759"/>
<dbReference type="PhylomeDB" id="Q60841"/>
<dbReference type="TreeFam" id="TF106479"/>
<dbReference type="Reactome" id="R-MMU-8866376">
    <property type="pathway name" value="Reelin signalling pathway"/>
</dbReference>
<dbReference type="BioGRID-ORCS" id="19699">
    <property type="hits" value="3 hits in 79 CRISPR screens"/>
</dbReference>
<dbReference type="ChiTaRS" id="Reln">
    <property type="organism name" value="mouse"/>
</dbReference>
<dbReference type="EvolutionaryTrace" id="Q60841"/>
<dbReference type="PRO" id="PR:Q60841"/>
<dbReference type="Proteomes" id="UP000000589">
    <property type="component" value="Chromosome 5"/>
</dbReference>
<dbReference type="RNAct" id="Q60841">
    <property type="molecule type" value="protein"/>
</dbReference>
<dbReference type="Bgee" id="ENSMUSG00000042453">
    <property type="expression patterns" value="Expressed in ciliary body and 320 other cell types or tissues"/>
</dbReference>
<dbReference type="ExpressionAtlas" id="Q60841">
    <property type="expression patterns" value="baseline and differential"/>
</dbReference>
<dbReference type="GO" id="GO:0062023">
    <property type="term" value="C:collagen-containing extracellular matrix"/>
    <property type="evidence" value="ECO:0007005"/>
    <property type="project" value="BHF-UCL"/>
</dbReference>
<dbReference type="GO" id="GO:0005737">
    <property type="term" value="C:cytoplasm"/>
    <property type="evidence" value="ECO:0000314"/>
    <property type="project" value="MGI"/>
</dbReference>
<dbReference type="GO" id="GO:0030425">
    <property type="term" value="C:dendrite"/>
    <property type="evidence" value="ECO:0000314"/>
    <property type="project" value="MGI"/>
</dbReference>
<dbReference type="GO" id="GO:0031012">
    <property type="term" value="C:extracellular matrix"/>
    <property type="evidence" value="ECO:0000314"/>
    <property type="project" value="MGI"/>
</dbReference>
<dbReference type="GO" id="GO:0005615">
    <property type="term" value="C:extracellular space"/>
    <property type="evidence" value="ECO:0000314"/>
    <property type="project" value="UniProtKB"/>
</dbReference>
<dbReference type="GO" id="GO:0005886">
    <property type="term" value="C:plasma membrane"/>
    <property type="evidence" value="ECO:0007669"/>
    <property type="project" value="GOC"/>
</dbReference>
<dbReference type="GO" id="GO:0110157">
    <property type="term" value="C:reelin complex"/>
    <property type="evidence" value="ECO:0000266"/>
    <property type="project" value="ComplexPortal"/>
</dbReference>
<dbReference type="GO" id="GO:0070325">
    <property type="term" value="F:lipoprotein particle receptor binding"/>
    <property type="evidence" value="ECO:0000353"/>
    <property type="project" value="BHF-UCL"/>
</dbReference>
<dbReference type="GO" id="GO:0046872">
    <property type="term" value="F:metal ion binding"/>
    <property type="evidence" value="ECO:0007669"/>
    <property type="project" value="UniProtKB-KW"/>
</dbReference>
<dbReference type="GO" id="GO:0048018">
    <property type="term" value="F:receptor ligand activity"/>
    <property type="evidence" value="ECO:0000314"/>
    <property type="project" value="UniProtKB"/>
</dbReference>
<dbReference type="GO" id="GO:0008236">
    <property type="term" value="F:serine-type peptidase activity"/>
    <property type="evidence" value="ECO:0000314"/>
    <property type="project" value="UniProtKB"/>
</dbReference>
<dbReference type="GO" id="GO:0070326">
    <property type="term" value="F:very-low-density lipoprotein particle receptor binding"/>
    <property type="evidence" value="ECO:0000353"/>
    <property type="project" value="BHF-UCL"/>
</dbReference>
<dbReference type="GO" id="GO:0008306">
    <property type="term" value="P:associative learning"/>
    <property type="evidence" value="ECO:0000314"/>
    <property type="project" value="BHF-UCL"/>
</dbReference>
<dbReference type="GO" id="GO:0007411">
    <property type="term" value="P:axon guidance"/>
    <property type="evidence" value="ECO:0000315"/>
    <property type="project" value="MGI"/>
</dbReference>
<dbReference type="GO" id="GO:0007420">
    <property type="term" value="P:brain development"/>
    <property type="evidence" value="ECO:0000315"/>
    <property type="project" value="MGI"/>
</dbReference>
<dbReference type="GO" id="GO:0007155">
    <property type="term" value="P:cell adhesion"/>
    <property type="evidence" value="ECO:0007669"/>
    <property type="project" value="UniProtKB-KW"/>
</dbReference>
<dbReference type="GO" id="GO:0016477">
    <property type="term" value="P:cell migration"/>
    <property type="evidence" value="ECO:0000315"/>
    <property type="project" value="MGI"/>
</dbReference>
<dbReference type="GO" id="GO:0000902">
    <property type="term" value="P:cell morphogenesis"/>
    <property type="evidence" value="ECO:0000315"/>
    <property type="project" value="MGI"/>
</dbReference>
<dbReference type="GO" id="GO:0007417">
    <property type="term" value="P:central nervous system development"/>
    <property type="evidence" value="ECO:0000315"/>
    <property type="project" value="MGI"/>
</dbReference>
<dbReference type="GO" id="GO:0021987">
    <property type="term" value="P:cerebral cortex development"/>
    <property type="evidence" value="ECO:0000315"/>
    <property type="project" value="MGI"/>
</dbReference>
<dbReference type="GO" id="GO:0021800">
    <property type="term" value="P:cerebral cortex tangential migration"/>
    <property type="evidence" value="ECO:0000315"/>
    <property type="project" value="MGI"/>
</dbReference>
<dbReference type="GO" id="GO:0016358">
    <property type="term" value="P:dendrite development"/>
    <property type="evidence" value="ECO:0000315"/>
    <property type="project" value="MGI"/>
</dbReference>
<dbReference type="GO" id="GO:0030900">
    <property type="term" value="P:forebrain development"/>
    <property type="evidence" value="ECO:0000315"/>
    <property type="project" value="MGI"/>
</dbReference>
<dbReference type="GO" id="GO:0010001">
    <property type="term" value="P:glial cell differentiation"/>
    <property type="evidence" value="ECO:0000315"/>
    <property type="project" value="MGI"/>
</dbReference>
<dbReference type="GO" id="GO:0021766">
    <property type="term" value="P:hippocampus development"/>
    <property type="evidence" value="ECO:0000314"/>
    <property type="project" value="BHF-UCL"/>
</dbReference>
<dbReference type="GO" id="GO:1904936">
    <property type="term" value="P:interneuron migration"/>
    <property type="evidence" value="ECO:0000315"/>
    <property type="project" value="MGI"/>
</dbReference>
<dbReference type="GO" id="GO:0097477">
    <property type="term" value="P:lateral motor column neuron migration"/>
    <property type="evidence" value="ECO:0000315"/>
    <property type="project" value="UniProtKB"/>
</dbReference>
<dbReference type="GO" id="GO:0021819">
    <property type="term" value="P:layer formation in cerebral cortex"/>
    <property type="evidence" value="ECO:0000314"/>
    <property type="project" value="UniProtKB"/>
</dbReference>
<dbReference type="GO" id="GO:0007612">
    <property type="term" value="P:learning"/>
    <property type="evidence" value="ECO:0000315"/>
    <property type="project" value="CACAO"/>
</dbReference>
<dbReference type="GO" id="GO:0007626">
    <property type="term" value="P:locomotory behavior"/>
    <property type="evidence" value="ECO:0000315"/>
    <property type="project" value="MGI"/>
</dbReference>
<dbReference type="GO" id="GO:0007616">
    <property type="term" value="P:long-term memory"/>
    <property type="evidence" value="ECO:0000314"/>
    <property type="project" value="BHF-UCL"/>
</dbReference>
<dbReference type="GO" id="GO:0060291">
    <property type="term" value="P:long-term synaptic potentiation"/>
    <property type="evidence" value="ECO:0000315"/>
    <property type="project" value="CACAO"/>
</dbReference>
<dbReference type="GO" id="GO:0050804">
    <property type="term" value="P:modulation of chemical synaptic transmission"/>
    <property type="evidence" value="ECO:0000315"/>
    <property type="project" value="BHF-UCL"/>
</dbReference>
<dbReference type="GO" id="GO:0097475">
    <property type="term" value="P:motor neuron migration"/>
    <property type="evidence" value="ECO:0000315"/>
    <property type="project" value="MGI"/>
</dbReference>
<dbReference type="GO" id="GO:0001764">
    <property type="term" value="P:neuron migration"/>
    <property type="evidence" value="ECO:0000315"/>
    <property type="project" value="MGI"/>
</dbReference>
<dbReference type="GO" id="GO:0097114">
    <property type="term" value="P:NMDA glutamate receptor clustering"/>
    <property type="evidence" value="ECO:0000315"/>
    <property type="project" value="BHF-UCL"/>
</dbReference>
<dbReference type="GO" id="GO:2000969">
    <property type="term" value="P:positive regulation of AMPA receptor activity"/>
    <property type="evidence" value="ECO:0000315"/>
    <property type="project" value="CACAO"/>
</dbReference>
<dbReference type="GO" id="GO:0032793">
    <property type="term" value="P:positive regulation of CREB transcription factor activity"/>
    <property type="evidence" value="ECO:0000315"/>
    <property type="project" value="CACAO"/>
</dbReference>
<dbReference type="GO" id="GO:0061003">
    <property type="term" value="P:positive regulation of dendritic spine morphogenesis"/>
    <property type="evidence" value="ECO:0000314"/>
    <property type="project" value="BHF-UCL"/>
</dbReference>
<dbReference type="GO" id="GO:2000463">
    <property type="term" value="P:positive regulation of excitatory postsynaptic potential"/>
    <property type="evidence" value="ECO:0000314"/>
    <property type="project" value="BHF-UCL"/>
</dbReference>
<dbReference type="GO" id="GO:1902078">
    <property type="term" value="P:positive regulation of lateral motor column neuron migration"/>
    <property type="evidence" value="ECO:0000315"/>
    <property type="project" value="BHF-UCL"/>
</dbReference>
<dbReference type="GO" id="GO:1900273">
    <property type="term" value="P:positive regulation of long-term synaptic potentiation"/>
    <property type="evidence" value="ECO:0000314"/>
    <property type="project" value="BHF-UCL"/>
</dbReference>
<dbReference type="GO" id="GO:0010976">
    <property type="term" value="P:positive regulation of neuron projection development"/>
    <property type="evidence" value="ECO:0000315"/>
    <property type="project" value="BHF-UCL"/>
</dbReference>
<dbReference type="GO" id="GO:0051897">
    <property type="term" value="P:positive regulation of phosphatidylinositol 3-kinase/protein kinase B signal transduction"/>
    <property type="evidence" value="ECO:0000314"/>
    <property type="project" value="BHF-UCL"/>
</dbReference>
<dbReference type="GO" id="GO:0061098">
    <property type="term" value="P:positive regulation of protein tyrosine kinase activity"/>
    <property type="evidence" value="ECO:0000315"/>
    <property type="project" value="CACAO"/>
</dbReference>
<dbReference type="GO" id="GO:0051057">
    <property type="term" value="P:positive regulation of small GTPase mediated signal transduction"/>
    <property type="evidence" value="ECO:0000314"/>
    <property type="project" value="MGI"/>
</dbReference>
<dbReference type="GO" id="GO:0090129">
    <property type="term" value="P:positive regulation of synapse maturation"/>
    <property type="evidence" value="ECO:0000314"/>
    <property type="project" value="BHF-UCL"/>
</dbReference>
<dbReference type="GO" id="GO:0051968">
    <property type="term" value="P:positive regulation of synaptic transmission, glutamatergic"/>
    <property type="evidence" value="ECO:0000314"/>
    <property type="project" value="BHF-UCL"/>
</dbReference>
<dbReference type="GO" id="GO:0032008">
    <property type="term" value="P:positive regulation of TOR signaling"/>
    <property type="evidence" value="ECO:0000314"/>
    <property type="project" value="BHF-UCL"/>
</dbReference>
<dbReference type="GO" id="GO:0097107">
    <property type="term" value="P:postsynaptic density assembly"/>
    <property type="evidence" value="ECO:0000315"/>
    <property type="project" value="BHF-UCL"/>
</dbReference>
<dbReference type="GO" id="GO:0097119">
    <property type="term" value="P:postsynaptic density protein 95 clustering"/>
    <property type="evidence" value="ECO:0000315"/>
    <property type="project" value="BHF-UCL"/>
</dbReference>
<dbReference type="GO" id="GO:0035418">
    <property type="term" value="P:protein localization to synapse"/>
    <property type="evidence" value="ECO:0000315"/>
    <property type="project" value="BHF-UCL"/>
</dbReference>
<dbReference type="GO" id="GO:0006508">
    <property type="term" value="P:proteolysis"/>
    <property type="evidence" value="ECO:0007669"/>
    <property type="project" value="UniProtKB-KW"/>
</dbReference>
<dbReference type="GO" id="GO:0097120">
    <property type="term" value="P:receptor localization to synapse"/>
    <property type="evidence" value="ECO:0000315"/>
    <property type="project" value="BHF-UCL"/>
</dbReference>
<dbReference type="GO" id="GO:0038026">
    <property type="term" value="P:reelin-mediated signaling pathway"/>
    <property type="evidence" value="ECO:0000314"/>
    <property type="project" value="UniProtKB"/>
</dbReference>
<dbReference type="GO" id="GO:0050795">
    <property type="term" value="P:regulation of behavior"/>
    <property type="evidence" value="ECO:0000315"/>
    <property type="project" value="BHF-UCL"/>
</dbReference>
<dbReference type="GO" id="GO:0010468">
    <property type="term" value="P:regulation of gene expression"/>
    <property type="evidence" value="ECO:0000315"/>
    <property type="project" value="MGI"/>
</dbReference>
<dbReference type="GO" id="GO:0045664">
    <property type="term" value="P:regulation of neuron differentiation"/>
    <property type="evidence" value="ECO:0000303"/>
    <property type="project" value="ComplexPortal"/>
</dbReference>
<dbReference type="GO" id="GO:2001222">
    <property type="term" value="P:regulation of neuron migration"/>
    <property type="evidence" value="ECO:0000303"/>
    <property type="project" value="ComplexPortal"/>
</dbReference>
<dbReference type="GO" id="GO:2000310">
    <property type="term" value="P:regulation of NMDA receptor activity"/>
    <property type="evidence" value="ECO:0000315"/>
    <property type="project" value="CACAO"/>
</dbReference>
<dbReference type="GO" id="GO:0090128">
    <property type="term" value="P:regulation of synapse maturation"/>
    <property type="evidence" value="ECO:0000314"/>
    <property type="project" value="SynGO"/>
</dbReference>
<dbReference type="GO" id="GO:0060025">
    <property type="term" value="P:regulation of synaptic activity"/>
    <property type="evidence" value="ECO:0000303"/>
    <property type="project" value="ComplexPortal"/>
</dbReference>
<dbReference type="GO" id="GO:0048265">
    <property type="term" value="P:response to pain"/>
    <property type="evidence" value="ECO:0000315"/>
    <property type="project" value="MGI"/>
</dbReference>
<dbReference type="GO" id="GO:0021511">
    <property type="term" value="P:spinal cord patterning"/>
    <property type="evidence" value="ECO:0000315"/>
    <property type="project" value="MGI"/>
</dbReference>
<dbReference type="GO" id="GO:0021517">
    <property type="term" value="P:ventral spinal cord development"/>
    <property type="evidence" value="ECO:0000270"/>
    <property type="project" value="UniProtKB"/>
</dbReference>
<dbReference type="CDD" id="cd00054">
    <property type="entry name" value="EGF_CA"/>
    <property type="match status" value="1"/>
</dbReference>
<dbReference type="CDD" id="cd08544">
    <property type="entry name" value="Reeler"/>
    <property type="match status" value="1"/>
</dbReference>
<dbReference type="CDD" id="cd10037">
    <property type="entry name" value="Reelin_repeat_1_subrepeat_1"/>
    <property type="match status" value="1"/>
</dbReference>
<dbReference type="CDD" id="cd10045">
    <property type="entry name" value="Reelin_repeat_1_subrepeat_2"/>
    <property type="match status" value="1"/>
</dbReference>
<dbReference type="CDD" id="cd10038">
    <property type="entry name" value="Reelin_repeat_2_subrepeat_1"/>
    <property type="match status" value="1"/>
</dbReference>
<dbReference type="CDD" id="cd10046">
    <property type="entry name" value="Reelin_repeat_2_subrepeat_2"/>
    <property type="match status" value="1"/>
</dbReference>
<dbReference type="CDD" id="cd10039">
    <property type="entry name" value="Reelin_repeat_3_subrepeat_1"/>
    <property type="match status" value="1"/>
</dbReference>
<dbReference type="CDD" id="cd10047">
    <property type="entry name" value="Reelin_repeat_3_subrepeat_2"/>
    <property type="match status" value="1"/>
</dbReference>
<dbReference type="CDD" id="cd10040">
    <property type="entry name" value="Reelin_repeat_4_subrepeat_1"/>
    <property type="match status" value="1"/>
</dbReference>
<dbReference type="CDD" id="cd10048">
    <property type="entry name" value="Reelin_repeat_4_subrepeat_2"/>
    <property type="match status" value="1"/>
</dbReference>
<dbReference type="CDD" id="cd10041">
    <property type="entry name" value="Reelin_repeat_5_subrepeat_1"/>
    <property type="match status" value="1"/>
</dbReference>
<dbReference type="CDD" id="cd10049">
    <property type="entry name" value="Reelin_repeat_5_subrepeat_2"/>
    <property type="match status" value="1"/>
</dbReference>
<dbReference type="CDD" id="cd10042">
    <property type="entry name" value="Reelin_repeat_6_subrepeat_1"/>
    <property type="match status" value="1"/>
</dbReference>
<dbReference type="CDD" id="cd10050">
    <property type="entry name" value="Reelin_repeat_6_subrepeat_2"/>
    <property type="match status" value="1"/>
</dbReference>
<dbReference type="CDD" id="cd10043">
    <property type="entry name" value="Reelin_repeat_7_subrepeat_1"/>
    <property type="match status" value="1"/>
</dbReference>
<dbReference type="CDD" id="cd10051">
    <property type="entry name" value="Reelin_repeat_7_subrepeat_2"/>
    <property type="match status" value="1"/>
</dbReference>
<dbReference type="CDD" id="cd10044">
    <property type="entry name" value="Reelin_repeat_8_subrepeat_1"/>
    <property type="match status" value="1"/>
</dbReference>
<dbReference type="CDD" id="cd10052">
    <property type="entry name" value="Reelin_repeat_8_subrepeat_2"/>
    <property type="match status" value="1"/>
</dbReference>
<dbReference type="CDD" id="cd10036">
    <property type="entry name" value="Reelin_subrepeat_Nt"/>
    <property type="match status" value="1"/>
</dbReference>
<dbReference type="FunFam" id="2.60.120.260:FF:000003">
    <property type="entry name" value="Reelin"/>
    <property type="match status" value="4"/>
</dbReference>
<dbReference type="FunFam" id="2.60.120.260:FF:000028">
    <property type="entry name" value="Reelin"/>
    <property type="match status" value="1"/>
</dbReference>
<dbReference type="FunFam" id="2.60.120.260:FF:000030">
    <property type="entry name" value="Reelin"/>
    <property type="match status" value="1"/>
</dbReference>
<dbReference type="FunFam" id="2.60.120.260:FF:000036">
    <property type="entry name" value="Reelin"/>
    <property type="match status" value="1"/>
</dbReference>
<dbReference type="FunFam" id="2.60.120.260:FF:000039">
    <property type="entry name" value="Reelin"/>
    <property type="match status" value="1"/>
</dbReference>
<dbReference type="FunFam" id="2.60.120.260:FF:000040">
    <property type="entry name" value="Reelin"/>
    <property type="match status" value="1"/>
</dbReference>
<dbReference type="FunFam" id="2.60.120.260:FF:000041">
    <property type="entry name" value="Reelin"/>
    <property type="match status" value="1"/>
</dbReference>
<dbReference type="FunFam" id="2.60.120.260:FF:000042">
    <property type="entry name" value="Reelin"/>
    <property type="match status" value="1"/>
</dbReference>
<dbReference type="FunFam" id="2.60.120.260:FF:000044">
    <property type="entry name" value="Reelin"/>
    <property type="match status" value="1"/>
</dbReference>
<dbReference type="FunFam" id="2.60.120.260:FF:000045">
    <property type="entry name" value="Reelin"/>
    <property type="match status" value="1"/>
</dbReference>
<dbReference type="FunFam" id="2.60.120.260:FF:000047">
    <property type="entry name" value="Reelin"/>
    <property type="match status" value="1"/>
</dbReference>
<dbReference type="FunFam" id="2.60.120.260:FF:000052">
    <property type="entry name" value="Reelin"/>
    <property type="match status" value="1"/>
</dbReference>
<dbReference type="FunFam" id="2.60.120.260:FF:000053">
    <property type="entry name" value="Reelin"/>
    <property type="match status" value="1"/>
</dbReference>
<dbReference type="FunFam" id="2.60.120.260:FF:000055">
    <property type="entry name" value="Reelin"/>
    <property type="match status" value="1"/>
</dbReference>
<dbReference type="FunFam" id="2.60.120.260:FF:000057">
    <property type="entry name" value="Reelin"/>
    <property type="match status" value="1"/>
</dbReference>
<dbReference type="FunFam" id="2.60.40.4060:FF:000001">
    <property type="entry name" value="Reelin"/>
    <property type="match status" value="1"/>
</dbReference>
<dbReference type="FunFam" id="2.60.120.260:FF:000056">
    <property type="entry name" value="reelin"/>
    <property type="match status" value="1"/>
</dbReference>
<dbReference type="Gene3D" id="2.60.120.260">
    <property type="entry name" value="Galactose-binding domain-like"/>
    <property type="match status" value="19"/>
</dbReference>
<dbReference type="Gene3D" id="2.60.40.4060">
    <property type="entry name" value="Reeler domain"/>
    <property type="match status" value="1"/>
</dbReference>
<dbReference type="InterPro" id="IPR000742">
    <property type="entry name" value="EGF-like_dom"/>
</dbReference>
<dbReference type="InterPro" id="IPR002861">
    <property type="entry name" value="Reeler_dom"/>
</dbReference>
<dbReference type="InterPro" id="IPR042307">
    <property type="entry name" value="Reeler_sf"/>
</dbReference>
<dbReference type="InterPro" id="IPR034968">
    <property type="entry name" value="Reelin"/>
</dbReference>
<dbReference type="InterPro" id="IPR049419">
    <property type="entry name" value="Reelin_subrepeat-B"/>
</dbReference>
<dbReference type="InterPro" id="IPR036278">
    <property type="entry name" value="Sialidase_sf"/>
</dbReference>
<dbReference type="PANTHER" id="PTHR11841">
    <property type="entry name" value="REELIN"/>
    <property type="match status" value="1"/>
</dbReference>
<dbReference type="PANTHER" id="PTHR11841:SF1">
    <property type="entry name" value="REELIN"/>
    <property type="match status" value="1"/>
</dbReference>
<dbReference type="Pfam" id="PF23106">
    <property type="entry name" value="EGF_Teneurin"/>
    <property type="match status" value="2"/>
</dbReference>
<dbReference type="Pfam" id="PF21471">
    <property type="entry name" value="Reelin_subrepeat-B"/>
    <property type="match status" value="18"/>
</dbReference>
<dbReference type="SMART" id="SM00181">
    <property type="entry name" value="EGF"/>
    <property type="match status" value="8"/>
</dbReference>
<dbReference type="SUPFAM" id="SSF50939">
    <property type="entry name" value="Sialidases"/>
    <property type="match status" value="3"/>
</dbReference>
<dbReference type="PROSITE" id="PS00022">
    <property type="entry name" value="EGF_1"/>
    <property type="match status" value="7"/>
</dbReference>
<dbReference type="PROSITE" id="PS01186">
    <property type="entry name" value="EGF_2"/>
    <property type="match status" value="6"/>
</dbReference>
<dbReference type="PROSITE" id="PS50026">
    <property type="entry name" value="EGF_3"/>
    <property type="match status" value="5"/>
</dbReference>
<dbReference type="PROSITE" id="PS51019">
    <property type="entry name" value="REELIN"/>
    <property type="match status" value="1"/>
</dbReference>
<reference key="1">
    <citation type="journal article" date="1995" name="Nature">
        <title>A protein related to extracellular matrix proteins deleted in the mouse mutant reeler.</title>
        <authorList>
            <person name="D'Arcangelo G."/>
            <person name="Miao G.G."/>
            <person name="Chen S.-C."/>
            <person name="Soares H.D."/>
            <person name="Morgan J.I."/>
            <person name="Curran T."/>
        </authorList>
    </citation>
    <scope>NUCLEOTIDE SEQUENCE [MRNA] (ISOFORM 1)</scope>
    <scope>FUNCTION</scope>
    <scope>DEVELOPMENTAL STAGE</scope>
    <scope>INVOLVEMENT IN RL</scope>
    <source>
        <tissue>Cerebellum</tissue>
    </source>
</reference>
<reference key="2">
    <citation type="journal article" date="1997" name="Genomics">
        <title>Genomic organization of the mouse reelin gene.</title>
        <authorList>
            <person name="Royaux I."/>
            <person name="Lambert de Rouvroit C."/>
            <person name="D'Arcangelo G."/>
            <person name="Demirov D."/>
            <person name="Goffinet A.M."/>
        </authorList>
    </citation>
    <scope>NUCLEOTIDE SEQUENCE [MRNA]</scope>
    <scope>ALTERNATIVE SPLICING</scope>
</reference>
<reference key="3">
    <citation type="journal article" date="2009" name="PLoS Biol.">
        <title>Lineage-specific biology revealed by a finished genome assembly of the mouse.</title>
        <authorList>
            <person name="Church D.M."/>
            <person name="Goodstadt L."/>
            <person name="Hillier L.W."/>
            <person name="Zody M.C."/>
            <person name="Goldstein S."/>
            <person name="She X."/>
            <person name="Bult C.J."/>
            <person name="Agarwala R."/>
            <person name="Cherry J.L."/>
            <person name="DiCuccio M."/>
            <person name="Hlavina W."/>
            <person name="Kapustin Y."/>
            <person name="Meric P."/>
            <person name="Maglott D."/>
            <person name="Birtle Z."/>
            <person name="Marques A.C."/>
            <person name="Graves T."/>
            <person name="Zhou S."/>
            <person name="Teague B."/>
            <person name="Potamousis K."/>
            <person name="Churas C."/>
            <person name="Place M."/>
            <person name="Herschleb J."/>
            <person name="Runnheim R."/>
            <person name="Forrest D."/>
            <person name="Amos-Landgraf J."/>
            <person name="Schwartz D.C."/>
            <person name="Cheng Z."/>
            <person name="Lindblad-Toh K."/>
            <person name="Eichler E.E."/>
            <person name="Ponting C.P."/>
        </authorList>
    </citation>
    <scope>NUCLEOTIDE SEQUENCE [LARGE SCALE GENOMIC DNA]</scope>
    <source>
        <strain>C57BL/6J</strain>
    </source>
</reference>
<reference key="4">
    <citation type="journal article" date="1995" name="Nat. Genet.">
        <title>The reeler gene encodes a protein with an EGF-like motif expressed by pioneer neurons.</title>
        <authorList>
            <person name="Hirotsune S."/>
            <person name="Takahara T."/>
            <person name="Sasaki N."/>
            <person name="Hirose K."/>
            <person name="Yoshiki A."/>
            <person name="Ohashi T."/>
            <person name="Kusakabe M."/>
            <person name="Murakami Y."/>
            <person name="Muramatsu M."/>
            <person name="Watanabe S."/>
            <person name="Nakao K."/>
            <person name="Katsuki M."/>
            <person name="Hayashizaki Y."/>
        </authorList>
    </citation>
    <scope>NUCLEOTIDE SEQUENCE [MRNA] OF 2152-3461 (ISOFORM 1)</scope>
    <source>
        <strain>BALB/cJ</strain>
        <tissue>Brain</tissue>
    </source>
</reference>
<reference key="5">
    <citation type="journal article" date="2005" name="Science">
        <title>The transcriptional landscape of the mammalian genome.</title>
        <authorList>
            <person name="Carninci P."/>
            <person name="Kasukawa T."/>
            <person name="Katayama S."/>
            <person name="Gough J."/>
            <person name="Frith M.C."/>
            <person name="Maeda N."/>
            <person name="Oyama R."/>
            <person name="Ravasi T."/>
            <person name="Lenhard B."/>
            <person name="Wells C."/>
            <person name="Kodzius R."/>
            <person name="Shimokawa K."/>
            <person name="Bajic V.B."/>
            <person name="Brenner S.E."/>
            <person name="Batalov S."/>
            <person name="Forrest A.R."/>
            <person name="Zavolan M."/>
            <person name="Davis M.J."/>
            <person name="Wilming L.G."/>
            <person name="Aidinis V."/>
            <person name="Allen J.E."/>
            <person name="Ambesi-Impiombato A."/>
            <person name="Apweiler R."/>
            <person name="Aturaliya R.N."/>
            <person name="Bailey T.L."/>
            <person name="Bansal M."/>
            <person name="Baxter L."/>
            <person name="Beisel K.W."/>
            <person name="Bersano T."/>
            <person name="Bono H."/>
            <person name="Chalk A.M."/>
            <person name="Chiu K.P."/>
            <person name="Choudhary V."/>
            <person name="Christoffels A."/>
            <person name="Clutterbuck D.R."/>
            <person name="Crowe M.L."/>
            <person name="Dalla E."/>
            <person name="Dalrymple B.P."/>
            <person name="de Bono B."/>
            <person name="Della Gatta G."/>
            <person name="di Bernardo D."/>
            <person name="Down T."/>
            <person name="Engstrom P."/>
            <person name="Fagiolini M."/>
            <person name="Faulkner G."/>
            <person name="Fletcher C.F."/>
            <person name="Fukushima T."/>
            <person name="Furuno M."/>
            <person name="Futaki S."/>
            <person name="Gariboldi M."/>
            <person name="Georgii-Hemming P."/>
            <person name="Gingeras T.R."/>
            <person name="Gojobori T."/>
            <person name="Green R.E."/>
            <person name="Gustincich S."/>
            <person name="Harbers M."/>
            <person name="Hayashi Y."/>
            <person name="Hensch T.K."/>
            <person name="Hirokawa N."/>
            <person name="Hill D."/>
            <person name="Huminiecki L."/>
            <person name="Iacono M."/>
            <person name="Ikeo K."/>
            <person name="Iwama A."/>
            <person name="Ishikawa T."/>
            <person name="Jakt M."/>
            <person name="Kanapin A."/>
            <person name="Katoh M."/>
            <person name="Kawasawa Y."/>
            <person name="Kelso J."/>
            <person name="Kitamura H."/>
            <person name="Kitano H."/>
            <person name="Kollias G."/>
            <person name="Krishnan S.P."/>
            <person name="Kruger A."/>
            <person name="Kummerfeld S.K."/>
            <person name="Kurochkin I.V."/>
            <person name="Lareau L.F."/>
            <person name="Lazarevic D."/>
            <person name="Lipovich L."/>
            <person name="Liu J."/>
            <person name="Liuni S."/>
            <person name="McWilliam S."/>
            <person name="Madan Babu M."/>
            <person name="Madera M."/>
            <person name="Marchionni L."/>
            <person name="Matsuda H."/>
            <person name="Matsuzawa S."/>
            <person name="Miki H."/>
            <person name="Mignone F."/>
            <person name="Miyake S."/>
            <person name="Morris K."/>
            <person name="Mottagui-Tabar S."/>
            <person name="Mulder N."/>
            <person name="Nakano N."/>
            <person name="Nakauchi H."/>
            <person name="Ng P."/>
            <person name="Nilsson R."/>
            <person name="Nishiguchi S."/>
            <person name="Nishikawa S."/>
            <person name="Nori F."/>
            <person name="Ohara O."/>
            <person name="Okazaki Y."/>
            <person name="Orlando V."/>
            <person name="Pang K.C."/>
            <person name="Pavan W.J."/>
            <person name="Pavesi G."/>
            <person name="Pesole G."/>
            <person name="Petrovsky N."/>
            <person name="Piazza S."/>
            <person name="Reed J."/>
            <person name="Reid J.F."/>
            <person name="Ring B.Z."/>
            <person name="Ringwald M."/>
            <person name="Rost B."/>
            <person name="Ruan Y."/>
            <person name="Salzberg S.L."/>
            <person name="Sandelin A."/>
            <person name="Schneider C."/>
            <person name="Schoenbach C."/>
            <person name="Sekiguchi K."/>
            <person name="Semple C.A."/>
            <person name="Seno S."/>
            <person name="Sessa L."/>
            <person name="Sheng Y."/>
            <person name="Shibata Y."/>
            <person name="Shimada H."/>
            <person name="Shimada K."/>
            <person name="Silva D."/>
            <person name="Sinclair B."/>
            <person name="Sperling S."/>
            <person name="Stupka E."/>
            <person name="Sugiura K."/>
            <person name="Sultana R."/>
            <person name="Takenaka Y."/>
            <person name="Taki K."/>
            <person name="Tammoja K."/>
            <person name="Tan S.L."/>
            <person name="Tang S."/>
            <person name="Taylor M.S."/>
            <person name="Tegner J."/>
            <person name="Teichmann S.A."/>
            <person name="Ueda H.R."/>
            <person name="van Nimwegen E."/>
            <person name="Verardo R."/>
            <person name="Wei C.L."/>
            <person name="Yagi K."/>
            <person name="Yamanishi H."/>
            <person name="Zabarovsky E."/>
            <person name="Zhu S."/>
            <person name="Zimmer A."/>
            <person name="Hide W."/>
            <person name="Bult C."/>
            <person name="Grimmond S.M."/>
            <person name="Teasdale R.D."/>
            <person name="Liu E.T."/>
            <person name="Brusic V."/>
            <person name="Quackenbush J."/>
            <person name="Wahlestedt C."/>
            <person name="Mattick J.S."/>
            <person name="Hume D.A."/>
            <person name="Kai C."/>
            <person name="Sasaki D."/>
            <person name="Tomaru Y."/>
            <person name="Fukuda S."/>
            <person name="Kanamori-Katayama M."/>
            <person name="Suzuki M."/>
            <person name="Aoki J."/>
            <person name="Arakawa T."/>
            <person name="Iida J."/>
            <person name="Imamura K."/>
            <person name="Itoh M."/>
            <person name="Kato T."/>
            <person name="Kawaji H."/>
            <person name="Kawagashira N."/>
            <person name="Kawashima T."/>
            <person name="Kojima M."/>
            <person name="Kondo S."/>
            <person name="Konno H."/>
            <person name="Nakano K."/>
            <person name="Ninomiya N."/>
            <person name="Nishio T."/>
            <person name="Okada M."/>
            <person name="Plessy C."/>
            <person name="Shibata K."/>
            <person name="Shiraki T."/>
            <person name="Suzuki S."/>
            <person name="Tagami M."/>
            <person name="Waki K."/>
            <person name="Watahiki A."/>
            <person name="Okamura-Oho Y."/>
            <person name="Suzuki H."/>
            <person name="Kawai J."/>
            <person name="Hayashizaki Y."/>
        </authorList>
    </citation>
    <scope>NUCLEOTIDE SEQUENCE [LARGE SCALE MRNA] OF 3044-3461 (ISOFORM 2)</scope>
    <source>
        <strain>C57BL/6J</strain>
        <tissue>Testis</tissue>
    </source>
</reference>
<reference key="6">
    <citation type="journal article" date="1997" name="J. Neurosci.">
        <title>Reelin is a secreted glycoprotein recognized by the CR-50 monoclonal antibody.</title>
        <authorList>
            <person name="D'Arcangelo G."/>
            <person name="Nakajima K."/>
            <person name="Miyata T."/>
            <person name="Ogawa M."/>
            <person name="Mikoshiba K."/>
            <person name="Curran T."/>
        </authorList>
    </citation>
    <scope>FUNCTION</scope>
    <scope>SUBCELLULAR LOCATION</scope>
    <scope>DOMAIN</scope>
</reference>
<reference key="7">
    <citation type="journal article" date="2002" name="J. Biol. Chem.">
        <title>Reelin is a serine protease of the extracellular matrix.</title>
        <authorList>
            <person name="Quattrocchi C.C."/>
            <person name="Wannenes F."/>
            <person name="Persico A.M."/>
            <person name="Ciafre S.A."/>
            <person name="D'Arcangelo G."/>
            <person name="Farace M.G."/>
            <person name="Keller F."/>
        </authorList>
    </citation>
    <scope>FUNCTION</scope>
    <scope>SUBCELLULAR LOCATION</scope>
</reference>
<reference key="8">
    <citation type="journal article" date="1997" name="Eur. J. Neurosci.">
        <title>Reelin mRNA expression during mouse brain development.</title>
        <authorList>
            <person name="Schiffmann S.N."/>
            <person name="Bernier B."/>
            <person name="Goffinet A.M."/>
        </authorList>
    </citation>
    <scope>TISSUE SPECIFICITY</scope>
</reference>
<reference key="9">
    <citation type="journal article" date="1999" name="Exp. Neurol.">
        <title>Evolutionarily conserved, alternative splicing of reelin during brain development.</title>
        <authorList>
            <person name="Lambert de Rouvroit C."/>
            <person name="Bernier B."/>
            <person name="Royaux I."/>
            <person name="de Bergeyck V."/>
            <person name="Goffinet A.M."/>
        </authorList>
    </citation>
    <scope>ALTERNATIVE SPLICING</scope>
    <scope>TISSUE SPECIFICITY</scope>
</reference>
<reference key="10">
    <citation type="journal article" date="1999" name="Neuron">
        <title>Direct binding of Reelin to VLDL receptor and ApoE receptor 2 induces tyrosine phosphorylation of disabled-1 and modulates tau phosphorylation.</title>
        <authorList>
            <person name="Hiesberger T."/>
            <person name="Trommsdorff M."/>
            <person name="Howell B.W."/>
            <person name="Goffinet A.M."/>
            <person name="Mumby M.C."/>
            <person name="Cooper J.A."/>
            <person name="Herz J."/>
        </authorList>
    </citation>
    <scope>FUNCTION</scope>
</reference>
<reference key="11">
    <citation type="journal article" date="2000" name="Proc. Natl. Acad. Sci. U.S.A.">
        <title>Reelin controls position of autonomic neurons in the spinal cord.</title>
        <authorList>
            <person name="Yip J.W."/>
            <person name="Yip Y.P.L."/>
            <person name="Nakajima K."/>
            <person name="Capriotti C."/>
        </authorList>
    </citation>
    <scope>FUNCTION</scope>
</reference>
<reference key="12">
    <citation type="journal article" date="2010" name="Cell">
        <title>A tissue-specific atlas of mouse protein phosphorylation and expression.</title>
        <authorList>
            <person name="Huttlin E.L."/>
            <person name="Jedrychowski M.P."/>
            <person name="Elias J.E."/>
            <person name="Goswami T."/>
            <person name="Rad R."/>
            <person name="Beausoleil S.A."/>
            <person name="Villen J."/>
            <person name="Haas W."/>
            <person name="Sowa M.E."/>
            <person name="Gygi S.P."/>
        </authorList>
    </citation>
    <scope>IDENTIFICATION BY MASS SPECTROMETRY [LARGE SCALE ANALYSIS]</scope>
    <source>
        <tissue>Brain</tissue>
    </source>
</reference>
<reference key="13">
    <citation type="journal article" date="2011" name="J. Biol. Chem.">
        <title>Functional importance of covalent homodimer of reelin protein linked via its central region.</title>
        <authorList>
            <person name="Yasui N."/>
            <person name="Kitago Y."/>
            <person name="Beppu A."/>
            <person name="Kohno T."/>
            <person name="Morishita S."/>
            <person name="Gomi H."/>
            <person name="Nagae M."/>
            <person name="Hattori M."/>
            <person name="Takagi J."/>
        </authorList>
    </citation>
    <scope>SUBUNIT</scope>
    <scope>INTERCHAIN DISULFIDE BOND</scope>
    <scope>MUTAGENESIS OF CYS-2101</scope>
</reference>
<reference key="14">
    <citation type="journal article" date="2006" name="EMBO J.">
        <title>Structure of a signaling-competent reelin fragment revealed by X-ray crystallography and electron tomography.</title>
        <authorList>
            <person name="Nogi T."/>
            <person name="Yasui N."/>
            <person name="Hattori M."/>
            <person name="Iwasaki K."/>
            <person name="Takagi J."/>
        </authorList>
    </citation>
    <scope>X-RAY CRYSTALLOGRAPHY (2.05 ANGSTROMS) OF 1222-1597</scope>
    <scope>DISULFIDE BONDS</scope>
    <scope>CALCIUM-BINDING</scope>
</reference>
<reference key="15">
    <citation type="journal article" date="2007" name="Proc. Natl. Acad. Sci. U.S.A.">
        <title>Structure of a receptor-binding fragment of reelin and mutational analysis reveal a recognition mechanism similar to endocytic receptors.</title>
        <authorList>
            <person name="Yasui N."/>
            <person name="Nogi T."/>
            <person name="Kitao T."/>
            <person name="Nakano Y."/>
            <person name="Hattori M."/>
            <person name="Takagi J."/>
        </authorList>
    </citation>
    <scope>X-RAY CRYSTALLOGRAPHY (2.0 ANGSTROMS) OF 1948-2662</scope>
    <scope>DISULFIDE BONDS</scope>
    <scope>GLYCOSYLATION AT ASN-2145; ASN-2269; ASN-2317 AND ASN-2569</scope>
    <scope>CALCIUM-BINDING</scope>
    <scope>ZINC-BINDING SITES</scope>
    <scope>MUTAGENESIS OF LYS-2360 AND LYS-2467</scope>
</reference>
<protein>
    <recommendedName>
        <fullName evidence="15">Reelin</fullName>
        <ecNumber evidence="7">3.4.21.-</ecNumber>
    </recommendedName>
    <alternativeName>
        <fullName>Reeler protein</fullName>
    </alternativeName>
</protein>
<gene>
    <name type="primary">Reln</name>
    <name type="synonym">Rl</name>
</gene>
<organism>
    <name type="scientific">Mus musculus</name>
    <name type="common">Mouse</name>
    <dbReference type="NCBI Taxonomy" id="10090"/>
    <lineage>
        <taxon>Eukaryota</taxon>
        <taxon>Metazoa</taxon>
        <taxon>Chordata</taxon>
        <taxon>Craniata</taxon>
        <taxon>Vertebrata</taxon>
        <taxon>Euteleostomi</taxon>
        <taxon>Mammalia</taxon>
        <taxon>Eutheria</taxon>
        <taxon>Euarchontoglires</taxon>
        <taxon>Glires</taxon>
        <taxon>Rodentia</taxon>
        <taxon>Myomorpha</taxon>
        <taxon>Muroidea</taxon>
        <taxon>Muridae</taxon>
        <taxon>Murinae</taxon>
        <taxon>Mus</taxon>
        <taxon>Mus</taxon>
    </lineage>
</organism>
<keyword id="KW-0002">3D-structure</keyword>
<keyword id="KW-0025">Alternative splicing</keyword>
<keyword id="KW-0106">Calcium</keyword>
<keyword id="KW-0130">Cell adhesion</keyword>
<keyword id="KW-0217">Developmental protein</keyword>
<keyword id="KW-1015">Disulfide bond</keyword>
<keyword id="KW-0245">EGF-like domain</keyword>
<keyword id="KW-0272">Extracellular matrix</keyword>
<keyword id="KW-0325">Glycoprotein</keyword>
<keyword id="KW-0378">Hydrolase</keyword>
<keyword id="KW-0479">Metal-binding</keyword>
<keyword id="KW-0645">Protease</keyword>
<keyword id="KW-1185">Reference proteome</keyword>
<keyword id="KW-0677">Repeat</keyword>
<keyword id="KW-0964">Secreted</keyword>
<keyword id="KW-0720">Serine protease</keyword>
<keyword id="KW-0732">Signal</keyword>
<keyword id="KW-0862">Zinc</keyword>
<comment type="function">
    <text evidence="5 6 7 11 12">Extracellular matrix serine protease secreted by pioneer neurons that plays a role in layering of neurons in the cerebral cortex and cerebellum by coordinating cell positioning during neurodevelopment (PubMed:10880573, PubMed:11689558, PubMed:7715726, PubMed:8987733). Regulates microtubule function in neurons and neuronal migration (PubMed:10880573, PubMed:7715726, PubMed:8987733). Binding to the extracellular domains of lipoprotein receptors VLDLR and LRP8/APOER2 induces tyrosine phosphorylation of DAB1 and modulation of TAU phosphorylation (PubMed:10571241). Affects migration of sympathetic preganglionic neurons in the spinal cord, where it seems to act as a barrier to neuronal migration (PubMed:11689558, PubMed:7715726, PubMed:8987733). Enzymatic activity is important for the modulation of cell adhesion (PubMed:11689558, PubMed:8987733).</text>
</comment>
<comment type="subunit">
    <text evidence="8 9 10">Oligomer of disulfide-linked homodimers.</text>
</comment>
<comment type="interaction">
    <interactant intactId="EBI-9248666">
        <id>Q60841</id>
    </interactant>
    <interactant intactId="EBI-432319">
        <id>Q924X6</id>
        <label>Lrp8</label>
    </interactant>
    <organismsDiffer>false</organismsDiffer>
    <experiments>4</experiments>
</comment>
<comment type="interaction">
    <interactant intactId="EBI-9248666">
        <id>Q60841</id>
    </interactant>
    <interactant intactId="EBI-2681187">
        <id>Q14114</id>
        <label>LRP8</label>
    </interactant>
    <organismsDiffer>true</organismsDiffer>
    <experiments>10</experiments>
</comment>
<comment type="interaction">
    <interactant intactId="EBI-9248666">
        <id>Q60841</id>
    </interactant>
    <interactant intactId="EBI-9004309">
        <id>P98155</id>
        <label>VLDLR</label>
    </interactant>
    <organismsDiffer>true</organismsDiffer>
    <experiments>7</experiments>
</comment>
<comment type="subcellular location">
    <subcellularLocation>
        <location evidence="7 12">Secreted</location>
        <location evidence="7 12">Extracellular space</location>
        <location evidence="7 12">Extracellular matrix</location>
    </subcellularLocation>
</comment>
<comment type="alternative products">
    <event type="alternative splicing"/>
    <isoform>
        <id>Q60841-1</id>
        <name>1</name>
        <sequence type="displayed"/>
    </isoform>
    <isoform>
        <id>Q60841-2</id>
        <name>2</name>
        <sequence type="described" ref="VSP_005577"/>
    </isoform>
    <isoform>
        <id>Q60841-3</id>
        <name>3</name>
        <sequence type="described" ref="VSP_005578"/>
    </isoform>
</comment>
<comment type="tissue specificity">
    <text evidence="4 13">The major isoform 1 is neuron-specific. It is abundantly produced during brain ontogenesis by the Cajal-Retzius cells and other pioneer neurons located in the telencephalic marginal zone and by granule cells of the external granular layer of the cerebellum. Expression is located in deeper layers in the developing hippocampus and olfactory bulb, low levels of expression are also detected in the immature striatum. At early developmental stages, expressed also in hypothalamic differentiation fields, tectum and spinal cord. A moderate to low level of expression occurs in the septal area, striatal fields, habenular nuclei, some thalamic nuclei, particularly the lateral geniculate, the retina and some nuclei of the reticular formation in the central field of the medulla. Very low levels found in liver and kidney. No expression in radial glial cells, cortical plate, Purkinje cells and inferior olivary neurons. The minor isoform 2 is only expressed in non neuronal cells. The minor isoform 3 is found in the same cells as isoform 1, but is almost undetectable in retina and brain stem.</text>
</comment>
<comment type="developmental stage">
    <text evidence="11">First detected at embryonic day 11.5. Expression increases up to birth and remains high from postnatal day 2 to 11 in both cerebellum and fore/midbrain. Expression declines thereafter and is largely brain specific in the adult.</text>
</comment>
<comment type="domain">
    <text evidence="12">The basic C-terminal region is essential for secretion.</text>
</comment>
<comment type="PTM">
    <text evidence="9">N-glycosylated and to a lesser extent also O-glycosylated.</text>
</comment>
<comment type="disease">
    <text evidence="11">Defects in Reln are the cause of the autosomal recessive reeler (rl) phenotype which is characterized by impaired motor coordination, tremors and ataxia. Neurons in affected mice fail to reach their correct locations in the developing brain, disrupting the organization of the cerebellar and cerebral cortices and other laminated regions.</text>
</comment>
<comment type="similarity">
    <text evidence="16">Belongs to the reelin family.</text>
</comment>
<comment type="sequence caution" evidence="16">
    <conflict type="erroneous initiation">
        <sequence resource="EMBL-CDS" id="BAA09788"/>
    </conflict>
</comment>
<evidence type="ECO:0000255" key="1"/>
<evidence type="ECO:0000255" key="2">
    <source>
        <dbReference type="PROSITE-ProRule" id="PRU00076"/>
    </source>
</evidence>
<evidence type="ECO:0000255" key="3">
    <source>
        <dbReference type="PROSITE-ProRule" id="PRU00363"/>
    </source>
</evidence>
<evidence type="ECO:0000269" key="4">
    <source>
    </source>
</evidence>
<evidence type="ECO:0000269" key="5">
    <source>
    </source>
</evidence>
<evidence type="ECO:0000269" key="6">
    <source>
    </source>
</evidence>
<evidence type="ECO:0000269" key="7">
    <source>
    </source>
</evidence>
<evidence type="ECO:0000269" key="8">
    <source>
    </source>
</evidence>
<evidence type="ECO:0000269" key="9">
    <source>
    </source>
</evidence>
<evidence type="ECO:0000269" key="10">
    <source>
    </source>
</evidence>
<evidence type="ECO:0000269" key="11">
    <source>
    </source>
</evidence>
<evidence type="ECO:0000269" key="12">
    <source>
    </source>
</evidence>
<evidence type="ECO:0000269" key="13">
    <source>
    </source>
</evidence>
<evidence type="ECO:0000303" key="14">
    <source>
    </source>
</evidence>
<evidence type="ECO:0000303" key="15">
    <source>
    </source>
</evidence>
<evidence type="ECO:0000305" key="16"/>
<evidence type="ECO:0007744" key="17">
    <source>
        <dbReference type="PDB" id="2DDU"/>
    </source>
</evidence>
<evidence type="ECO:0007744" key="18">
    <source>
        <dbReference type="PDB" id="2E26"/>
    </source>
</evidence>
<evidence type="ECO:0007829" key="19">
    <source>
        <dbReference type="PDB" id="2DDU"/>
    </source>
</evidence>
<evidence type="ECO:0007829" key="20">
    <source>
        <dbReference type="PDB" id="2E26"/>
    </source>
</evidence>
<evidence type="ECO:0007829" key="21">
    <source>
        <dbReference type="PDB" id="3A7Q"/>
    </source>
</evidence>
<evidence type="ECO:0007829" key="22">
    <source>
        <dbReference type="PDB" id="5B4X"/>
    </source>
</evidence>
<evidence type="ECO:0007829" key="23">
    <source>
        <dbReference type="PDB" id="6A48"/>
    </source>
</evidence>
<evidence type="ECO:0007829" key="24">
    <source>
        <dbReference type="PDB" id="7LYU"/>
    </source>
</evidence>
<proteinExistence type="evidence at protein level"/>
<feature type="signal peptide" evidence="1">
    <location>
        <begin position="1"/>
        <end position="26"/>
    </location>
</feature>
<feature type="chain" id="PRO_0000030305" description="Reelin">
    <location>
        <begin position="27"/>
        <end position="3461"/>
    </location>
</feature>
<feature type="domain" description="Reelin" evidence="3">
    <location>
        <begin position="27"/>
        <end position="191"/>
    </location>
</feature>
<feature type="repeat" description="BNR 1">
    <location>
        <begin position="593"/>
        <end position="604"/>
    </location>
</feature>
<feature type="domain" description="EGF-like 1" evidence="2">
    <location>
        <begin position="671"/>
        <end position="702"/>
    </location>
</feature>
<feature type="repeat" description="BNR 2">
    <location>
        <begin position="799"/>
        <end position="810"/>
    </location>
</feature>
<feature type="repeat" description="BNR 3">
    <location>
        <begin position="952"/>
        <end position="963"/>
    </location>
</feature>
<feature type="domain" description="EGF-like 2" evidence="2">
    <location>
        <begin position="1030"/>
        <end position="1061"/>
    </location>
</feature>
<feature type="repeat" description="BNR 4">
    <location>
        <begin position="1157"/>
        <end position="1168"/>
    </location>
</feature>
<feature type="repeat" description="BNR 5">
    <location>
        <begin position="1323"/>
        <end position="1334"/>
    </location>
</feature>
<feature type="domain" description="EGF-like 3" evidence="2">
    <location>
        <begin position="1409"/>
        <end position="1442"/>
    </location>
</feature>
<feature type="repeat" description="BNR 6">
    <location>
        <begin position="1535"/>
        <end position="1546"/>
    </location>
</feature>
<feature type="repeat" description="BNR 7">
    <location>
        <begin position="1686"/>
        <end position="1697"/>
    </location>
</feature>
<feature type="domain" description="EGF-like 4" evidence="2">
    <location>
        <begin position="1765"/>
        <end position="1796"/>
    </location>
</feature>
<feature type="repeat" description="BNR 8">
    <location>
        <begin position="1884"/>
        <end position="1895"/>
    </location>
</feature>
<feature type="repeat" description="BNR 9">
    <location>
        <begin position="2043"/>
        <end position="2054"/>
    </location>
</feature>
<feature type="domain" description="EGF-like 5" evidence="2">
    <location>
        <begin position="2129"/>
        <end position="2161"/>
    </location>
</feature>
<feature type="repeat" description="BNR 10">
    <location>
        <begin position="2250"/>
        <end position="2261"/>
    </location>
</feature>
<feature type="repeat" description="BNR 11">
    <location>
        <begin position="2399"/>
        <end position="2410"/>
    </location>
</feature>
<feature type="domain" description="EGF-like 6" evidence="2">
    <location>
        <begin position="2478"/>
        <end position="2509"/>
    </location>
</feature>
<feature type="repeat" description="BNR 12">
    <location>
        <begin position="2598"/>
        <end position="2609"/>
    </location>
</feature>
<feature type="repeat" description="BNR 13">
    <location>
        <begin position="2778"/>
        <end position="2789"/>
    </location>
</feature>
<feature type="domain" description="EGF-like 7" evidence="2">
    <location>
        <begin position="2853"/>
        <end position="2884"/>
    </location>
</feature>
<feature type="repeat" description="BNR 14">
    <location>
        <begin position="2979"/>
        <end position="2990"/>
    </location>
</feature>
<feature type="repeat" description="BNR 15">
    <location>
        <begin position="3143"/>
        <end position="3155"/>
    </location>
</feature>
<feature type="domain" description="EGF-like 8" evidence="2">
    <location>
        <begin position="3228"/>
        <end position="3260"/>
    </location>
</feature>
<feature type="repeat" description="BNR 16">
    <location>
        <begin position="3363"/>
        <end position="3374"/>
    </location>
</feature>
<feature type="binding site" evidence="9 18">
    <location>
        <position position="2061"/>
    </location>
    <ligand>
        <name>Zn(2+)</name>
        <dbReference type="ChEBI" id="CHEBI:29105"/>
        <label>1</label>
    </ligand>
</feature>
<feature type="binding site" evidence="9 18">
    <location>
        <position position="2074"/>
    </location>
    <ligand>
        <name>Zn(2+)</name>
        <dbReference type="ChEBI" id="CHEBI:29105"/>
        <label>1</label>
    </ligand>
</feature>
<feature type="binding site" evidence="9 18">
    <location>
        <position position="2179"/>
    </location>
    <ligand>
        <name>Zn(2+)</name>
        <dbReference type="ChEBI" id="CHEBI:29105"/>
        <label>1</label>
    </ligand>
</feature>
<feature type="binding site" evidence="9 18">
    <location>
        <position position="2264"/>
    </location>
    <ligand>
        <name>Zn(2+)</name>
        <dbReference type="ChEBI" id="CHEBI:29105"/>
        <label>1</label>
    </ligand>
</feature>
<feature type="binding site" evidence="9 18">
    <location>
        <position position="2397"/>
    </location>
    <ligand>
        <name>Zn(2+)</name>
        <dbReference type="ChEBI" id="CHEBI:29105"/>
        <label>2</label>
    </ligand>
</feature>
<feature type="binding site" evidence="9 18">
    <location>
        <position position="2399"/>
    </location>
    <ligand>
        <name>Zn(2+)</name>
        <dbReference type="ChEBI" id="CHEBI:29105"/>
        <label>2</label>
    </ligand>
</feature>
<feature type="binding site" evidence="9 18">
    <location>
        <position position="2460"/>
    </location>
    <ligand>
        <name>Zn(2+)</name>
        <dbReference type="ChEBI" id="CHEBI:29105"/>
        <label>2</label>
    </ligand>
</feature>
<feature type="glycosylation site" description="N-linked (GlcNAc...) asparagine" evidence="1">
    <location>
        <position position="141"/>
    </location>
</feature>
<feature type="glycosylation site" description="N-linked (GlcNAc...) asparagine" evidence="1">
    <location>
        <position position="258"/>
    </location>
</feature>
<feature type="glycosylation site" description="N-linked (GlcNAc...) asparagine" evidence="1">
    <location>
        <position position="290"/>
    </location>
</feature>
<feature type="glycosylation site" description="N-linked (GlcNAc...) asparagine" evidence="1">
    <location>
        <position position="306"/>
    </location>
</feature>
<feature type="glycosylation site" description="N-linked (GlcNAc...) asparagine" evidence="1">
    <location>
        <position position="629"/>
    </location>
</feature>
<feature type="glycosylation site" description="N-linked (GlcNAc...) asparagine" evidence="1">
    <location>
        <position position="1267"/>
    </location>
</feature>
<feature type="glycosylation site" description="N-linked (GlcNAc...) asparagine" evidence="1">
    <location>
        <position position="1447"/>
    </location>
</feature>
<feature type="glycosylation site" description="N-linked (GlcNAc...) asparagine" evidence="1">
    <location>
        <position position="1600"/>
    </location>
</feature>
<feature type="glycosylation site" description="N-linked (GlcNAc...) asparagine" evidence="1">
    <location>
        <position position="1750"/>
    </location>
</feature>
<feature type="glycosylation site" description="N-linked (GlcNAc...) asparagine" evidence="1">
    <location>
        <position position="1921"/>
    </location>
</feature>
<feature type="glycosylation site" description="N-linked (GlcNAc...) asparagine" evidence="9">
    <location>
        <position position="2145"/>
    </location>
</feature>
<feature type="glycosylation site" description="N-linked (GlcNAc...) asparagine" evidence="9">
    <location>
        <position position="2269"/>
    </location>
</feature>
<feature type="glycosylation site" description="N-linked (GlcNAc...) asparagine" evidence="9">
    <location>
        <position position="2317"/>
    </location>
</feature>
<feature type="glycosylation site" description="N-linked (GlcNAc...) asparagine" evidence="9">
    <location>
        <position position="2569"/>
    </location>
</feature>
<feature type="glycosylation site" description="N-linked (GlcNAc...) asparagine" evidence="1">
    <location>
        <position position="2962"/>
    </location>
</feature>
<feature type="glycosylation site" description="N-linked (GlcNAc...) asparagine" evidence="1">
    <location>
        <position position="3016"/>
    </location>
</feature>
<feature type="glycosylation site" description="N-linked (GlcNAc...) asparagine" evidence="1">
    <location>
        <position position="3073"/>
    </location>
</feature>
<feature type="glycosylation site" description="N-linked (GlcNAc...) asparagine" evidence="1">
    <location>
        <position position="3185"/>
    </location>
</feature>
<feature type="glycosylation site" description="N-linked (GlcNAc...) asparagine" evidence="1">
    <location>
        <position position="3412"/>
    </location>
</feature>
<feature type="glycosylation site" description="N-linked (GlcNAc...) asparagine" evidence="1">
    <location>
        <position position="3439"/>
    </location>
</feature>
<feature type="disulfide bond" evidence="2">
    <location>
        <begin position="41"/>
        <end position="127"/>
    </location>
</feature>
<feature type="disulfide bond" evidence="2">
    <location>
        <begin position="155"/>
        <end position="179"/>
    </location>
</feature>
<feature type="disulfide bond" evidence="2">
    <location>
        <begin position="540"/>
        <end position="581"/>
    </location>
</feature>
<feature type="disulfide bond" evidence="2">
    <location>
        <begin position="609"/>
        <end position="614"/>
    </location>
</feature>
<feature type="disulfide bond" evidence="2">
    <location>
        <begin position="675"/>
        <end position="685"/>
    </location>
</feature>
<feature type="disulfide bond" evidence="2">
    <location>
        <begin position="692"/>
        <end position="701"/>
    </location>
</feature>
<feature type="disulfide bond" evidence="2">
    <location>
        <begin position="895"/>
        <end position="937"/>
    </location>
</feature>
<feature type="disulfide bond" evidence="2">
    <location>
        <begin position="968"/>
        <end position="975"/>
    </location>
</feature>
<feature type="disulfide bond" evidence="2">
    <location>
        <begin position="1034"/>
        <end position="1044"/>
    </location>
</feature>
<feature type="disulfide bond" evidence="2">
    <location>
        <begin position="1051"/>
        <end position="1060"/>
    </location>
</feature>
<feature type="disulfide bond" evidence="8 17">
    <location>
        <begin position="1339"/>
        <end position="1348"/>
    </location>
</feature>
<feature type="disulfide bond" evidence="8 17">
    <location>
        <begin position="1413"/>
        <end position="1423"/>
    </location>
</feature>
<feature type="disulfide bond" evidence="8 17">
    <location>
        <begin position="1417"/>
        <end position="1428"/>
    </location>
</feature>
<feature type="disulfide bond" evidence="8 17">
    <location>
        <begin position="1430"/>
        <end position="1441"/>
    </location>
</feature>
<feature type="disulfide bond" evidence="8 17">
    <location>
        <begin position="1475"/>
        <end position="1522"/>
    </location>
</feature>
<feature type="disulfide bond" evidence="2">
    <location>
        <begin position="1633"/>
        <end position="1673"/>
    </location>
</feature>
<feature type="disulfide bond" evidence="2">
    <location>
        <begin position="1702"/>
        <end position="1709"/>
    </location>
</feature>
<feature type="disulfide bond" evidence="9 18">
    <location>
        <begin position="1983"/>
        <end position="2030"/>
    </location>
</feature>
<feature type="disulfide bond" evidence="9 18">
    <location>
        <begin position="2059"/>
        <end position="2070"/>
    </location>
</feature>
<feature type="disulfide bond" description="Interchain" evidence="10">
    <location>
        <position position="2101"/>
    </location>
</feature>
<feature type="disulfide bond" evidence="9 18">
    <location>
        <begin position="2133"/>
        <end position="2143"/>
    </location>
</feature>
<feature type="disulfide bond" evidence="9 18">
    <location>
        <begin position="2137"/>
        <end position="2149"/>
    </location>
</feature>
<feature type="disulfide bond" evidence="9 18">
    <location>
        <begin position="2151"/>
        <end position="2160"/>
    </location>
</feature>
<feature type="disulfide bond" evidence="9 18">
    <location>
        <begin position="2195"/>
        <end position="2235"/>
    </location>
</feature>
<feature type="disulfide bond" evidence="9 18">
    <location>
        <begin position="2348"/>
        <end position="2387"/>
    </location>
</feature>
<feature type="disulfide bond" evidence="9 18">
    <location>
        <begin position="2393"/>
        <end position="2559"/>
    </location>
</feature>
<feature type="disulfide bond" evidence="9 18">
    <location>
        <begin position="2482"/>
        <end position="2492"/>
    </location>
</feature>
<feature type="disulfide bond" evidence="9 18">
    <location>
        <begin position="2486"/>
        <end position="2497"/>
    </location>
</feature>
<feature type="disulfide bond" evidence="9 18">
    <location>
        <begin position="2499"/>
        <end position="2508"/>
    </location>
</feature>
<feature type="disulfide bond" evidence="9 18">
    <location>
        <begin position="2544"/>
        <end position="2584"/>
    </location>
</feature>
<feature type="disulfide bond" evidence="2">
    <location>
        <begin position="2794"/>
        <end position="2801"/>
    </location>
</feature>
<feature type="disulfide bond" evidence="2">
    <location>
        <begin position="2919"/>
        <end position="2966"/>
    </location>
</feature>
<feature type="disulfide bond" evidence="2">
    <location>
        <begin position="3160"/>
        <end position="3170"/>
    </location>
</feature>
<feature type="disulfide bond" evidence="2">
    <location>
        <begin position="3232"/>
        <end position="3242"/>
    </location>
</feature>
<feature type="disulfide bond" evidence="2">
    <location>
        <begin position="3236"/>
        <end position="3248"/>
    </location>
</feature>
<feature type="disulfide bond" evidence="2">
    <location>
        <begin position="3250"/>
        <end position="3259"/>
    </location>
</feature>
<feature type="disulfide bond" evidence="2">
    <location>
        <begin position="3296"/>
        <end position="3346"/>
    </location>
</feature>
<feature type="splice variant" id="VSP_005578" description="In isoform 3." evidence="16">
    <location>
        <begin position="3429"/>
        <end position="3461"/>
    </location>
</feature>
<feature type="splice variant" id="VSP_005577" description="In isoform 2." evidence="14">
    <location>
        <begin position="3429"/>
        <end position="3430"/>
    </location>
</feature>
<feature type="mutagenesis site" description="Fails to assemble into disulfide-bonded multimers, while still exhibiting non-covalently associated high molecular weight oligomeric states in solution; retains binding to LRP8 and VLDR receptors but fails to show signaling activity." evidence="10">
    <original>C</original>
    <variation>A</variation>
    <location>
        <position position="2101"/>
    </location>
</feature>
<feature type="mutagenesis site" description="Abolishes ApoER2-binding." evidence="9">
    <original>K</original>
    <variation>A</variation>
    <location>
        <position position="2360"/>
    </location>
</feature>
<feature type="mutagenesis site" description="Abolishes ApoER2-binding." evidence="9">
    <original>K</original>
    <variation>A</variation>
    <location>
        <position position="2467"/>
    </location>
</feature>
<feature type="sequence conflict" description="In Ref. 1; AAB91599." evidence="16" ref="1">
    <original>A</original>
    <variation>G</variation>
    <location>
        <position position="1191"/>
    </location>
</feature>
<feature type="sequence conflict" description="In Ref. 1; AAB91599." evidence="16" ref="1">
    <original>Q</original>
    <variation>K</variation>
    <location>
        <position position="1202"/>
    </location>
</feature>
<feature type="sequence conflict" description="In Ref. 1; AAB91599." evidence="16" ref="1">
    <original>V</original>
    <variation>L</variation>
    <location>
        <position position="1335"/>
    </location>
</feature>
<feature type="sequence conflict" description="In Ref. 1; AAB91599." evidence="16" ref="1">
    <original>G</original>
    <variation>A</variation>
    <location>
        <position position="1345"/>
    </location>
</feature>
<feature type="sequence conflict" description="In Ref. 1; AAB91599." evidence="16" ref="1">
    <original>R</original>
    <variation>S</variation>
    <location>
        <position position="1505"/>
    </location>
</feature>
<feature type="sequence conflict" description="In Ref. 1; AAB91599." evidence="16" ref="1">
    <original>CIK</original>
    <variation>YIT</variation>
    <location>
        <begin position="1522"/>
        <end position="1524"/>
    </location>
</feature>
<feature type="sequence conflict" description="In Ref. 1; AAB91599." evidence="16" ref="1">
    <original>N</original>
    <variation>Y</variation>
    <location>
        <position position="1529"/>
    </location>
</feature>
<feature type="sequence conflict" description="In Ref. 1; AAB91599." evidence="16" ref="1">
    <original>D</original>
    <variation>G</variation>
    <location>
        <position position="1593"/>
    </location>
</feature>
<feature type="sequence conflict" description="In Ref. 1; AAB91599." evidence="16" ref="1">
    <original>F</original>
    <variation>L</variation>
    <location>
        <position position="1611"/>
    </location>
</feature>
<feature type="sequence conflict" description="In Ref. 1; AAB91599." evidence="16" ref="1">
    <original>K</original>
    <variation>N</variation>
    <location>
        <position position="1648"/>
    </location>
</feature>
<feature type="sequence conflict" description="In Ref. 1; AAB91599." evidence="16" ref="1">
    <original>A</original>
    <variation>E</variation>
    <location>
        <position position="1661"/>
    </location>
</feature>
<feature type="sequence conflict" description="In Ref. 1; AAB91599." evidence="16" ref="1">
    <original>F</original>
    <variation>W</variation>
    <location>
        <position position="1667"/>
    </location>
</feature>
<feature type="sequence conflict" description="In Ref. 5; BAB30592." evidence="16" ref="5">
    <location>
        <position position="3066"/>
    </location>
</feature>
<feature type="strand" evidence="23">
    <location>
        <begin position="201"/>
        <end position="205"/>
    </location>
</feature>
<feature type="turn" evidence="23">
    <location>
        <begin position="217"/>
        <end position="219"/>
    </location>
</feature>
<feature type="strand" evidence="23">
    <location>
        <begin position="227"/>
        <end position="230"/>
    </location>
</feature>
<feature type="strand" evidence="23">
    <location>
        <begin position="235"/>
        <end position="238"/>
    </location>
</feature>
<feature type="strand" evidence="23">
    <location>
        <begin position="240"/>
        <end position="243"/>
    </location>
</feature>
<feature type="strand" evidence="23">
    <location>
        <begin position="246"/>
        <end position="248"/>
    </location>
</feature>
<feature type="strand" evidence="23">
    <location>
        <begin position="251"/>
        <end position="254"/>
    </location>
</feature>
<feature type="strand" evidence="23">
    <location>
        <begin position="262"/>
        <end position="270"/>
    </location>
</feature>
<feature type="strand" evidence="23">
    <location>
        <begin position="283"/>
        <end position="289"/>
    </location>
</feature>
<feature type="strand" evidence="23">
    <location>
        <begin position="296"/>
        <end position="301"/>
    </location>
</feature>
<feature type="strand" evidence="23">
    <location>
        <begin position="306"/>
        <end position="308"/>
    </location>
</feature>
<feature type="strand" evidence="23">
    <location>
        <begin position="310"/>
        <end position="315"/>
    </location>
</feature>
<feature type="helix" evidence="23">
    <location>
        <begin position="318"/>
        <end position="320"/>
    </location>
</feature>
<feature type="strand" evidence="23">
    <location>
        <begin position="322"/>
        <end position="331"/>
    </location>
</feature>
<feature type="strand" evidence="23">
    <location>
        <begin position="344"/>
        <end position="356"/>
    </location>
</feature>
<feature type="strand" evidence="23">
    <location>
        <begin position="361"/>
        <end position="363"/>
    </location>
</feature>
<feature type="helix" evidence="23">
    <location>
        <begin position="370"/>
        <end position="372"/>
    </location>
</feature>
<feature type="strand" evidence="23">
    <location>
        <begin position="379"/>
        <end position="383"/>
    </location>
</feature>
<feature type="strand" evidence="23">
    <location>
        <begin position="391"/>
        <end position="394"/>
    </location>
</feature>
<feature type="strand" evidence="23">
    <location>
        <begin position="404"/>
        <end position="407"/>
    </location>
</feature>
<feature type="strand" evidence="23">
    <location>
        <begin position="420"/>
        <end position="423"/>
    </location>
</feature>
<feature type="strand" evidence="23">
    <location>
        <begin position="433"/>
        <end position="436"/>
    </location>
</feature>
<feature type="strand" evidence="23">
    <location>
        <begin position="438"/>
        <end position="440"/>
    </location>
</feature>
<feature type="strand" evidence="23">
    <location>
        <begin position="446"/>
        <end position="449"/>
    </location>
</feature>
<feature type="strand" evidence="23">
    <location>
        <begin position="451"/>
        <end position="454"/>
    </location>
</feature>
<feature type="strand" evidence="23">
    <location>
        <begin position="456"/>
        <end position="458"/>
    </location>
</feature>
<feature type="strand" evidence="23">
    <location>
        <begin position="461"/>
        <end position="463"/>
    </location>
</feature>
<feature type="strand" evidence="23">
    <location>
        <begin position="474"/>
        <end position="482"/>
    </location>
</feature>
<feature type="helix" evidence="23">
    <location>
        <begin position="491"/>
        <end position="493"/>
    </location>
</feature>
<feature type="strand" evidence="23">
    <location>
        <begin position="495"/>
        <end position="501"/>
    </location>
</feature>
<feature type="strand" evidence="23">
    <location>
        <begin position="507"/>
        <end position="513"/>
    </location>
</feature>
<feature type="turn" evidence="23">
    <location>
        <begin position="515"/>
        <end position="517"/>
    </location>
</feature>
<feature type="strand" evidence="23">
    <location>
        <begin position="522"/>
        <end position="527"/>
    </location>
</feature>
<feature type="helix" evidence="23">
    <location>
        <begin position="530"/>
        <end position="532"/>
    </location>
</feature>
<feature type="strand" evidence="23">
    <location>
        <begin position="534"/>
        <end position="544"/>
    </location>
</feature>
<feature type="strand" evidence="23">
    <location>
        <begin position="554"/>
        <end position="562"/>
    </location>
</feature>
<feature type="strand" evidence="23">
    <location>
        <begin position="571"/>
        <end position="583"/>
    </location>
</feature>
<feature type="strand" evidence="23">
    <location>
        <begin position="589"/>
        <end position="597"/>
    </location>
</feature>
<feature type="strand" evidence="23">
    <location>
        <begin position="603"/>
        <end position="605"/>
    </location>
</feature>
<feature type="turn" evidence="23">
    <location>
        <begin position="611"/>
        <end position="613"/>
    </location>
</feature>
<feature type="strand" evidence="23">
    <location>
        <begin position="623"/>
        <end position="626"/>
    </location>
</feature>
<feature type="turn" evidence="23">
    <location>
        <begin position="627"/>
        <end position="629"/>
    </location>
</feature>
<feature type="strand" evidence="23">
    <location>
        <begin position="632"/>
        <end position="639"/>
    </location>
</feature>
<feature type="helix" evidence="23">
    <location>
        <begin position="642"/>
        <end position="644"/>
    </location>
</feature>
<feature type="strand" evidence="23">
    <location>
        <begin position="646"/>
        <end position="655"/>
    </location>
</feature>
<feature type="strand" evidence="23">
    <location>
        <begin position="664"/>
        <end position="673"/>
    </location>
</feature>
<feature type="helix" evidence="23">
    <location>
        <begin position="676"/>
        <end position="681"/>
    </location>
</feature>
<feature type="strand" evidence="23">
    <location>
        <begin position="682"/>
        <end position="686"/>
    </location>
</feature>
<feature type="strand" evidence="23">
    <location>
        <begin position="689"/>
        <end position="692"/>
    </location>
</feature>
<feature type="strand" evidence="23">
    <location>
        <begin position="696"/>
        <end position="698"/>
    </location>
</feature>
<feature type="strand" evidence="23">
    <location>
        <begin position="703"/>
        <end position="706"/>
    </location>
</feature>
<feature type="strand" evidence="23">
    <location>
        <begin position="712"/>
        <end position="714"/>
    </location>
</feature>
<feature type="helix" evidence="23">
    <location>
        <begin position="721"/>
        <end position="723"/>
    </location>
</feature>
<feature type="strand" evidence="23">
    <location>
        <begin position="727"/>
        <end position="732"/>
    </location>
</feature>
<feature type="strand" evidence="23">
    <location>
        <begin position="734"/>
        <end position="737"/>
    </location>
</feature>
<feature type="strand" evidence="23">
    <location>
        <begin position="742"/>
        <end position="745"/>
    </location>
</feature>
<feature type="strand" evidence="23">
    <location>
        <begin position="747"/>
        <end position="750"/>
    </location>
</feature>
<feature type="strand" evidence="23">
    <location>
        <begin position="752"/>
        <end position="754"/>
    </location>
</feature>
<feature type="strand" evidence="23">
    <location>
        <begin position="756"/>
        <end position="760"/>
    </location>
</feature>
<feature type="strand" evidence="23">
    <location>
        <begin position="770"/>
        <end position="777"/>
    </location>
</feature>
<feature type="strand" evidence="23">
    <location>
        <begin position="795"/>
        <end position="803"/>
    </location>
</feature>
<feature type="strand" evidence="23">
    <location>
        <begin position="809"/>
        <end position="814"/>
    </location>
</feature>
<feature type="strand" evidence="23">
    <location>
        <begin position="823"/>
        <end position="828"/>
    </location>
</feature>
<feature type="helix" evidence="23">
    <location>
        <begin position="831"/>
        <end position="833"/>
    </location>
</feature>
<feature type="strand" evidence="23">
    <location>
        <begin position="836"/>
        <end position="844"/>
    </location>
</feature>
<feature type="strand" evidence="23">
    <location>
        <begin position="849"/>
        <end position="851"/>
    </location>
</feature>
<feature type="strand" evidence="23">
    <location>
        <begin position="855"/>
        <end position="862"/>
    </location>
</feature>
<feature type="strand" evidence="19">
    <location>
        <begin position="1301"/>
        <end position="1310"/>
    </location>
</feature>
<feature type="strand" evidence="19">
    <location>
        <begin position="1320"/>
        <end position="1327"/>
    </location>
</feature>
<feature type="strand" evidence="19">
    <location>
        <begin position="1333"/>
        <end position="1335"/>
    </location>
</feature>
<feature type="strand" evidence="19">
    <location>
        <begin position="1345"/>
        <end position="1348"/>
    </location>
</feature>
<feature type="strand" evidence="19">
    <location>
        <begin position="1359"/>
        <end position="1361"/>
    </location>
</feature>
<feature type="strand" evidence="19">
    <location>
        <begin position="1370"/>
        <end position="1375"/>
    </location>
</feature>
<feature type="helix" evidence="19">
    <location>
        <begin position="1378"/>
        <end position="1380"/>
    </location>
</feature>
<feature type="strand" evidence="19">
    <location>
        <begin position="1386"/>
        <end position="1390"/>
    </location>
</feature>
<feature type="strand" evidence="19">
    <location>
        <begin position="1408"/>
        <end position="1411"/>
    </location>
</feature>
<feature type="helix" evidence="19">
    <location>
        <begin position="1414"/>
        <end position="1419"/>
    </location>
</feature>
<feature type="strand" evidence="19">
    <location>
        <begin position="1420"/>
        <end position="1424"/>
    </location>
</feature>
<feature type="strand" evidence="19">
    <location>
        <begin position="1427"/>
        <end position="1430"/>
    </location>
</feature>
<feature type="strand" evidence="19">
    <location>
        <begin position="1434"/>
        <end position="1437"/>
    </location>
</feature>
<feature type="strand" evidence="19">
    <location>
        <begin position="1440"/>
        <end position="1445"/>
    </location>
</feature>
<feature type="strand" evidence="19">
    <location>
        <begin position="1451"/>
        <end position="1453"/>
    </location>
</feature>
<feature type="strand" evidence="19">
    <location>
        <begin position="1456"/>
        <end position="1458"/>
    </location>
</feature>
<feature type="strand" evidence="19">
    <location>
        <begin position="1463"/>
        <end position="1472"/>
    </location>
</feature>
<feature type="strand" evidence="19">
    <location>
        <begin position="1478"/>
        <end position="1481"/>
    </location>
</feature>
<feature type="strand" evidence="19">
    <location>
        <begin position="1483"/>
        <end position="1486"/>
    </location>
</feature>
<feature type="strand" evidence="19">
    <location>
        <begin position="1493"/>
        <end position="1496"/>
    </location>
</feature>
<feature type="strand" evidence="19">
    <location>
        <begin position="1506"/>
        <end position="1513"/>
    </location>
</feature>
<feature type="strand" evidence="19">
    <location>
        <begin position="1516"/>
        <end position="1518"/>
    </location>
</feature>
<feature type="helix" evidence="19">
    <location>
        <begin position="1528"/>
        <end position="1530"/>
    </location>
</feature>
<feature type="strand" evidence="19">
    <location>
        <begin position="1531"/>
        <end position="1539"/>
    </location>
</feature>
<feature type="strand" evidence="19">
    <location>
        <begin position="1545"/>
        <end position="1550"/>
    </location>
</feature>
<feature type="strand" evidence="19">
    <location>
        <begin position="1559"/>
        <end position="1564"/>
    </location>
</feature>
<feature type="helix" evidence="19">
    <location>
        <begin position="1567"/>
        <end position="1569"/>
    </location>
</feature>
<feature type="strand" evidence="19">
    <location>
        <begin position="1571"/>
        <end position="1579"/>
    </location>
</feature>
<feature type="helix" evidence="19">
    <location>
        <begin position="1584"/>
        <end position="1586"/>
    </location>
</feature>
<feature type="strand" evidence="19">
    <location>
        <begin position="1590"/>
        <end position="1597"/>
    </location>
</feature>
<feature type="strand" evidence="20">
    <location>
        <begin position="1958"/>
        <end position="1960"/>
    </location>
</feature>
<feature type="strand" evidence="20">
    <location>
        <begin position="1963"/>
        <end position="1965"/>
    </location>
</feature>
<feature type="helix" evidence="20">
    <location>
        <begin position="1968"/>
        <end position="1970"/>
    </location>
</feature>
<feature type="strand" evidence="20">
    <location>
        <begin position="1971"/>
        <end position="1973"/>
    </location>
</feature>
<feature type="strand" evidence="20">
    <location>
        <begin position="1978"/>
        <end position="1980"/>
    </location>
</feature>
<feature type="strand" evidence="20">
    <location>
        <begin position="1996"/>
        <end position="1999"/>
    </location>
</feature>
<feature type="strand" evidence="22">
    <location>
        <begin position="2001"/>
        <end position="2003"/>
    </location>
</feature>
<feature type="strand" evidence="20">
    <location>
        <begin position="2005"/>
        <end position="2011"/>
    </location>
</feature>
<feature type="strand" evidence="20">
    <location>
        <begin position="2014"/>
        <end position="2016"/>
    </location>
</feature>
<feature type="strand" evidence="20">
    <location>
        <begin position="2020"/>
        <end position="2032"/>
    </location>
</feature>
<feature type="strand" evidence="20">
    <location>
        <begin position="2040"/>
        <end position="2047"/>
    </location>
</feature>
<feature type="strand" evidence="20">
    <location>
        <begin position="2053"/>
        <end position="2056"/>
    </location>
</feature>
<feature type="strand" evidence="20">
    <location>
        <begin position="2059"/>
        <end position="2061"/>
    </location>
</feature>
<feature type="strand" evidence="20">
    <location>
        <begin position="2078"/>
        <end position="2080"/>
    </location>
</feature>
<feature type="strand" evidence="20">
    <location>
        <begin position="2089"/>
        <end position="2095"/>
    </location>
</feature>
<feature type="turn" evidence="20">
    <location>
        <begin position="2096"/>
        <end position="2099"/>
    </location>
</feature>
<feature type="strand" evidence="20">
    <location>
        <begin position="2102"/>
        <end position="2113"/>
    </location>
</feature>
<feature type="strand" evidence="20">
    <location>
        <begin position="2122"/>
        <end position="2131"/>
    </location>
</feature>
<feature type="helix" evidence="20">
    <location>
        <begin position="2134"/>
        <end position="2139"/>
    </location>
</feature>
<feature type="strand" evidence="20">
    <location>
        <begin position="2140"/>
        <end position="2144"/>
    </location>
</feature>
<feature type="turn" evidence="20">
    <location>
        <begin position="2145"/>
        <end position="2147"/>
    </location>
</feature>
<feature type="strand" evidence="20">
    <location>
        <begin position="2148"/>
        <end position="2151"/>
    </location>
</feature>
<feature type="strand" evidence="20">
    <location>
        <begin position="2155"/>
        <end position="2157"/>
    </location>
</feature>
<feature type="strand" evidence="20">
    <location>
        <begin position="2170"/>
        <end position="2172"/>
    </location>
</feature>
<feature type="strand" evidence="20">
    <location>
        <begin position="2174"/>
        <end position="2176"/>
    </location>
</feature>
<feature type="strand" evidence="20">
    <location>
        <begin position="2178"/>
        <end position="2187"/>
    </location>
</feature>
<feature type="strand" evidence="20">
    <location>
        <begin position="2189"/>
        <end position="2193"/>
    </location>
</feature>
<feature type="strand" evidence="20">
    <location>
        <begin position="2197"/>
        <end position="2201"/>
    </location>
</feature>
<feature type="strand" evidence="20">
    <location>
        <begin position="2203"/>
        <end position="2206"/>
    </location>
</feature>
<feature type="strand" evidence="21">
    <location>
        <begin position="2208"/>
        <end position="2210"/>
    </location>
</feature>
<feature type="strand" evidence="20">
    <location>
        <begin position="2212"/>
        <end position="2216"/>
    </location>
</feature>
<feature type="strand" evidence="20">
    <location>
        <begin position="2226"/>
        <end position="2233"/>
    </location>
</feature>
<feature type="strand" evidence="20">
    <location>
        <begin position="2236"/>
        <end position="2238"/>
    </location>
</feature>
<feature type="strand" evidence="20">
    <location>
        <begin position="2247"/>
        <end position="2254"/>
    </location>
</feature>
<feature type="strand" evidence="20">
    <location>
        <begin position="2260"/>
        <end position="2265"/>
    </location>
</feature>
<feature type="turn" evidence="20">
    <location>
        <begin position="2269"/>
        <end position="2272"/>
    </location>
</feature>
<feature type="strand" evidence="20">
    <location>
        <begin position="2275"/>
        <end position="2280"/>
    </location>
</feature>
<feature type="helix" evidence="20">
    <location>
        <begin position="2283"/>
        <end position="2285"/>
    </location>
</feature>
<feature type="strand" evidence="20">
    <location>
        <begin position="2287"/>
        <end position="2296"/>
    </location>
</feature>
<feature type="strand" evidence="20">
    <location>
        <begin position="2299"/>
        <end position="2301"/>
    </location>
</feature>
<feature type="strand" evidence="20">
    <location>
        <begin position="2307"/>
        <end position="2315"/>
    </location>
</feature>
<feature type="turn" evidence="22">
    <location>
        <begin position="2318"/>
        <end position="2320"/>
    </location>
</feature>
<feature type="strand" evidence="20">
    <location>
        <begin position="2324"/>
        <end position="2326"/>
    </location>
</feature>
<feature type="strand" evidence="20">
    <location>
        <begin position="2328"/>
        <end position="2330"/>
    </location>
</feature>
<feature type="turn" evidence="20">
    <location>
        <begin position="2333"/>
        <end position="2335"/>
    </location>
</feature>
<feature type="strand" evidence="20">
    <location>
        <begin position="2336"/>
        <end position="2338"/>
    </location>
</feature>
<feature type="strand" evidence="20">
    <location>
        <begin position="2343"/>
        <end position="2345"/>
    </location>
</feature>
<feature type="strand" evidence="20">
    <location>
        <begin position="2354"/>
        <end position="2357"/>
    </location>
</feature>
<feature type="strand" evidence="20">
    <location>
        <begin position="2364"/>
        <end position="2368"/>
    </location>
</feature>
<feature type="strand" evidence="20">
    <location>
        <begin position="2371"/>
        <end position="2373"/>
    </location>
</feature>
<feature type="strand" evidence="20">
    <location>
        <begin position="2378"/>
        <end position="2384"/>
    </location>
</feature>
<feature type="strand" evidence="21">
    <location>
        <begin position="2387"/>
        <end position="2389"/>
    </location>
</feature>
<feature type="strand" evidence="20">
    <location>
        <begin position="2395"/>
        <end position="2403"/>
    </location>
</feature>
<feature type="strand" evidence="20">
    <location>
        <begin position="2409"/>
        <end position="2412"/>
    </location>
</feature>
<feature type="strand" evidence="20">
    <location>
        <begin position="2419"/>
        <end position="2422"/>
    </location>
</feature>
<feature type="turn" evidence="20">
    <location>
        <begin position="2433"/>
        <end position="2436"/>
    </location>
</feature>
<feature type="strand" evidence="20">
    <location>
        <begin position="2440"/>
        <end position="2445"/>
    </location>
</feature>
<feature type="helix" evidence="20">
    <location>
        <begin position="2448"/>
        <end position="2450"/>
    </location>
</feature>
<feature type="strand" evidence="20">
    <location>
        <begin position="2452"/>
        <end position="2461"/>
    </location>
</feature>
<feature type="strand" evidence="20">
    <location>
        <begin position="2471"/>
        <end position="2480"/>
    </location>
</feature>
<feature type="helix" evidence="20">
    <location>
        <begin position="2484"/>
        <end position="2488"/>
    </location>
</feature>
<feature type="strand" evidence="20">
    <location>
        <begin position="2489"/>
        <end position="2493"/>
    </location>
</feature>
<feature type="strand" evidence="20">
    <location>
        <begin position="2496"/>
        <end position="2499"/>
    </location>
</feature>
<feature type="strand" evidence="20">
    <location>
        <begin position="2503"/>
        <end position="2505"/>
    </location>
</feature>
<feature type="strand" evidence="20">
    <location>
        <begin position="2510"/>
        <end position="2513"/>
    </location>
</feature>
<feature type="strand" evidence="20">
    <location>
        <begin position="2519"/>
        <end position="2521"/>
    </location>
</feature>
<feature type="strand" evidence="22">
    <location>
        <begin position="2523"/>
        <end position="2526"/>
    </location>
</feature>
<feature type="turn" evidence="20">
    <location>
        <begin position="2529"/>
        <end position="2531"/>
    </location>
</feature>
<feature type="strand" evidence="20">
    <location>
        <begin position="2532"/>
        <end position="2542"/>
    </location>
</feature>
<feature type="strand" evidence="20">
    <location>
        <begin position="2547"/>
        <end position="2550"/>
    </location>
</feature>
<feature type="strand" evidence="20">
    <location>
        <begin position="2552"/>
        <end position="2555"/>
    </location>
</feature>
<feature type="strand" evidence="20">
    <location>
        <begin position="2562"/>
        <end position="2565"/>
    </location>
</feature>
<feature type="strand" evidence="20">
    <location>
        <begin position="2575"/>
        <end position="2582"/>
    </location>
</feature>
<feature type="strand" evidence="20">
    <location>
        <begin position="2584"/>
        <end position="2586"/>
    </location>
</feature>
<feature type="helix" evidence="20">
    <location>
        <begin position="2591"/>
        <end position="2593"/>
    </location>
</feature>
<feature type="strand" evidence="20">
    <location>
        <begin position="2594"/>
        <end position="2602"/>
    </location>
</feature>
<feature type="strand" evidence="20">
    <location>
        <begin position="2608"/>
        <end position="2613"/>
    </location>
</feature>
<feature type="strand" evidence="21">
    <location>
        <begin position="2615"/>
        <end position="2617"/>
    </location>
</feature>
<feature type="strand" evidence="20">
    <location>
        <begin position="2622"/>
        <end position="2627"/>
    </location>
</feature>
<feature type="helix" evidence="20">
    <location>
        <begin position="2630"/>
        <end position="2632"/>
    </location>
</feature>
<feature type="strand" evidence="20">
    <location>
        <begin position="2634"/>
        <end position="2642"/>
    </location>
</feature>
<feature type="strand" evidence="20">
    <location>
        <begin position="2654"/>
        <end position="2661"/>
    </location>
</feature>
<feature type="strand" evidence="24">
    <location>
        <begin position="3059"/>
        <end position="3061"/>
    </location>
</feature>
<feature type="strand" evidence="24">
    <location>
        <begin position="3081"/>
        <end position="3084"/>
    </location>
</feature>
<feature type="strand" evidence="24">
    <location>
        <begin position="3091"/>
        <end position="3096"/>
    </location>
</feature>
<feature type="strand" evidence="24">
    <location>
        <begin position="3107"/>
        <end position="3109"/>
    </location>
</feature>
<feature type="strand" evidence="24">
    <location>
        <begin position="3113"/>
        <end position="3115"/>
    </location>
</feature>
<feature type="strand" evidence="24">
    <location>
        <begin position="3119"/>
        <end position="3128"/>
    </location>
</feature>
<feature type="strand" evidence="24">
    <location>
        <begin position="3140"/>
        <end position="3146"/>
    </location>
</feature>
<feature type="helix" evidence="24">
    <location>
        <begin position="3148"/>
        <end position="3150"/>
    </location>
</feature>
<feature type="strand" evidence="24">
    <location>
        <begin position="3153"/>
        <end position="3157"/>
    </location>
</feature>
<feature type="strand" evidence="24">
    <location>
        <begin position="3179"/>
        <end position="3181"/>
    </location>
</feature>
<feature type="turn" evidence="24">
    <location>
        <begin position="3183"/>
        <end position="3185"/>
    </location>
</feature>
<feature type="strand" evidence="24">
    <location>
        <begin position="3190"/>
        <end position="3195"/>
    </location>
</feature>
<feature type="helix" evidence="24">
    <location>
        <begin position="3198"/>
        <end position="3200"/>
    </location>
</feature>
<feature type="strand" evidence="24">
    <location>
        <begin position="3202"/>
        <end position="3210"/>
    </location>
</feature>
<feature type="strand" evidence="24">
    <location>
        <begin position="3221"/>
        <end position="3230"/>
    </location>
</feature>
<feature type="helix" evidence="24">
    <location>
        <begin position="3233"/>
        <end position="3238"/>
    </location>
</feature>
<feature type="strand" evidence="24">
    <location>
        <begin position="3239"/>
        <end position="3243"/>
    </location>
</feature>
<feature type="turn" evidence="24">
    <location>
        <begin position="3244"/>
        <end position="3246"/>
    </location>
</feature>
<feature type="strand" evidence="24">
    <location>
        <begin position="3247"/>
        <end position="3250"/>
    </location>
</feature>
<feature type="strand" evidence="24">
    <location>
        <begin position="3254"/>
        <end position="3259"/>
    </location>
</feature>
<feature type="strand" evidence="24">
    <location>
        <begin position="3261"/>
        <end position="3264"/>
    </location>
</feature>
<feature type="helix" evidence="24">
    <location>
        <begin position="3277"/>
        <end position="3283"/>
    </location>
</feature>
<feature type="strand" evidence="24">
    <location>
        <begin position="3284"/>
        <end position="3289"/>
    </location>
</feature>
<feature type="strand" evidence="24">
    <location>
        <begin position="3291"/>
        <end position="3293"/>
    </location>
</feature>
<feature type="strand" evidence="24">
    <location>
        <begin position="3307"/>
        <end position="3310"/>
    </location>
</feature>
<feature type="strand" evidence="24">
    <location>
        <begin position="3316"/>
        <end position="3320"/>
    </location>
</feature>
<feature type="strand" evidence="24">
    <location>
        <begin position="3330"/>
        <end position="3338"/>
    </location>
</feature>
<feature type="strand" evidence="24">
    <location>
        <begin position="3350"/>
        <end position="3352"/>
    </location>
</feature>
<feature type="turn" evidence="24">
    <location>
        <begin position="3353"/>
        <end position="3358"/>
    </location>
</feature>
<feature type="strand" evidence="24">
    <location>
        <begin position="3359"/>
        <end position="3367"/>
    </location>
</feature>
<feature type="strand" evidence="24">
    <location>
        <begin position="3373"/>
        <end position="3378"/>
    </location>
</feature>
<feature type="helix" evidence="24">
    <location>
        <begin position="3380"/>
        <end position="3382"/>
    </location>
</feature>
<feature type="strand" evidence="24">
    <location>
        <begin position="3387"/>
        <end position="3392"/>
    </location>
</feature>
<feature type="helix" evidence="24">
    <location>
        <begin position="3395"/>
        <end position="3397"/>
    </location>
</feature>
<feature type="strand" evidence="24">
    <location>
        <begin position="3399"/>
        <end position="3408"/>
    </location>
</feature>
<feature type="strand" evidence="24">
    <location>
        <begin position="3419"/>
        <end position="3426"/>
    </location>
</feature>
<name>RELN_MOUSE</name>
<sequence length="3461" mass="387495">MERGCWAPRALVLAVLLLLATLRARAATGYYPRFSPFFFLCTHHGELEGDGEQGEVLISLHIAGNPTYYVPGQEYHVTISTSTFFDGLLVTGLYTSTSIQSSQSIGGSSAFGFGIMSDHQFGNQFMCSVVASHVSHLPTTNLSFVWIAPPAGTGCVNFMATATHRGQVIFKDALAQQLCEQGAPTEATAYSHLAEIHSDSVILRDDFDSYQQLELNPNIWVECSNCEMGEQCGTIMHGNAVTFCEPYGPRELTTTCLNTTTASVLQFSIGSGSCRFSYSDPSITVSYAKNNTADWIQLEKIRAPSNVSTVIHILYLPEEAKGESVQFQWKQDSLRVGEVYEACWALDNILVINSAHREVVLEDNLDPVDTGNWLFFPGATVKHSCQSDGNSIYFHGNEGSEFNFATTRDVDLSTEDIQEQWSEEFESQPTGWDILGAVVGADCGTVESGLSLVFLKDGERKLCTPYMDTTGYGNLRFYFVMGGICDPGVSHENDIILYAKIEGRKEHIALDTLTYSSYKVPSLVSVVINPELQTPATKFCLRQKSHQGYNRNVWAVDFFHVLPVLPSTMSHMIQFSINLGCGTHQPGNSVSLEFSTNHGRSWSLLHTECLPEICAGPHLPHSTVYSSENYSGWNRITIPLPNAALTRDTRIRWRQTGPILGNMWAIDNVYIGPSCLKFCSGRGQCTRHGCKCDPGFSGPACEMASQTFPMFISESFGSARLSSYHNFYSIRGAEVSFGCGVLASGKALVFNKDGRRQLITSFLDSSQSRFLQFTLRLGSKSVLSTCRAPDQPGEGVLLHYSYDNGITWKLLEHYSYVNYHEPRIISVELPDDARQFGIQFRWWQPYHSSQGEDVWAIDEIVMTSVLFNSISLDFTNLVEVTQSLGFYLGNVQPYCGHDWTLCFTGDSKLASSMRYVETQSMQIGASYMIQFSLVMGCGQKYTPHMDNQVKLEYSANHGLTWHLVQEECLPSMPSCQEFTSASIYHASEFTQWRRVTVVLPQKTWSGATRFRWSQSYYTAQDEWALDNIYIGQQCPNMCSGHGSCDHGVCRCDQGYQGTECHPEAALPSTIMSDFENPSSWESDWQEVIGGEVVKPEQGCGVVSSGSSLYFSKAGKRQLVSWDLDTSWVDFVQFYIQIGGESAACNKPDSREEGILLQYSNNGGIQWHLLAEMYFSDFSKPRFVYLELPAAAKTPCTRFRWWQPVFSGEDYDQWAVDDIIILSEKQKQVIPVVNPTLPQNFYEKPAFDYPMNQMSVWLMLANEGMAKNDSFCATTPSAMVFGKSDGDRFAVTRDLTLKPGYVLQFKLNIGCTSQFSSTAPVLLQYSHDAGMSWFLVKEGCFPASAGKGCEGNSRELSEPTVYYTGDFEEWTRITIAIPRSLASSKTRFRWIQESSSQKNVPPFGLDGVYISEPCPSYCSGHGDCISGVCFCDLGYTAAQGTCVSNTPNHSEMFDRFEGKLSPLWYKITGGQVGTGCGTLNDGRSLYFNGLGKREARTVPLDTRNIRLVQFYIQIGSKTSGITCIKPRARNEGLVVQYSNDNGILWHLLRELDFMSFLEPQIISIDLPREAKTPATAFRWWQPQHGKHSAQWALDDVLIGVNDSSQTGFQDKFDGSIDLQANWYRIQGGQVDIDCLSMDTALIFTENIGKPRYAETWDFHVSASSFLQFEMNMGCSKPFSGAHGIQLQYSLNNGKDWQLVTEECVPPTIGCVHYTESSTYTSERFQNWRRVTVYLPLATNSPRTRFRWIQTNYTVGADSWAIDNVILASGCPWMCSGRGICDSGRCVCDRGFGGPFCVPVVPLPSILKDDFNGNLHPDLWPEVYGAERGNLNGETIKSGTCLIFKGEGLRMLISRDLDCTNTMYVQFSLRFIAKGTPERSHSILLQFSVSGGVTWHLMDEFYFPQTTSILFINVPLPYGAQTNATRFRLWQPYNNGKKEEIWIIDDFIIDGNNLNNPVLLLDTFDFGPREDNWFFYPGGNIGLYCPYSSKGAPEEDSAMVFVSNEVGEHSITTRDLSVNENTIIQFEINVGCSTDSSSADPVRLEFSRDFGATWHLLLPLCYHSSSLVSSLCSTEHHPSSTYYAGTTQGWRREVVHFGKLHLCGSVRFRWYQGFYPAGSQPVTWAIDNVYIGPQCEEMCYGHGSCINGTKCICDPGYSGPTCKISTKNPDFLKDDFEGQLESDRFLLMSGGKPSRKCGILSSGNNLFFNEDGLRMLVTRDLDLSHARFVQFFMRLGCGKGVPDPRSQPVLLQYSLNGGLSWSLLQEFLFSNSSNVGRYIALEMPLKARSGSTRLRWWQPSENGHFYSPWVIDQILIGGNISGNTVLEDDFSTLDSRKWLLHPGGTKMPVCGSTGDALVFIEKASTRYVVTTDIAVNEDSFLQIDFAASCSVTDSCYAIELEYSVDLGLSWHPLVRDCLPTNVECSRYHLQRILVSDTFNKWTRITLPLPSYTRSQATRFRWHQPAPFDKQQTWAIDNVYIGDGCLDMCSGHGRCVQGSCVCDEQWGGLYCDEPETSLPTQLKDNFNRAPSNQNWLTVSGGKLSTVCGAVASGLALHFSGGCSRLLVTVDLNLTNAEFIQFYFMYGCLITPSNRNQGVLLEYSVNGGITWNLLMEIFYDQYSKPGFVNILLPPDAKEIATRFRWWQPRHDGLDQNDWAIDNVLISGSADQRTVMLDTFSSAPVPQHERSPADAGPVGRIAFEMFLEDKTSVNENWLFHDDCTVERFCDSPDGVMLCGSHDGREVYAVTHDLTPTENWIMQFKISVGCKVPEKIAQNQIHVQFSTDFGVSWSYLVPQCLPADPKCSGSVSQPSVFFPTEGWKRITYPLPESLTGNPVRFRFYQKYSDVQWAIDNFYLGPGCLDNCGGHGDCLKEQCICDPGYSGPNCYLTHSLKTFLKERFDSEEIKPDLWMSLEGGSTCTECGVLAENTALYFGGSTVRQAITQDLDLRGAKFLQYWGRIGSENNMTSCHRPVCRKEGVLLDFSTDGGITWTLLHEMDFQKYISVRHDYILLPEGALTNTTRLRWWQPFVISNGLVVSGVERAQWALDNILIGGAEINPSQLVDTFDDEGSSHEENWSFYPNAVRTAGFCGNPSFHLYWPNKKKDKTHNALSSRELIIQPGYMMQFKIVVGCEATSCGDLHSVMLEYTKDARSDSWQLVQTQCLPSSSNSIGCSPFQFHEATIYNAVNSSSWKRITIQLPDHVSSSATQFRWIQKGEETEKQSWAIDHVYIGEACPKLCSGHGYCTTGAVCICDESFQGDDCSVFSHELPSYIKDNFESARVTEANWETIQGGVIGSGCGQLAPYAHGDSLYFNGCQIRQAATKPLDLTRASKIMFVLQIGSPAQTDSCNSDLSGPHTVDKAVLLQYSVNNGITWHVIAQHQPKDFTQAQRVSYNVPLEARMKGVLLRWWQPRHNGTGHDQWALDHVEVVLVSTRKQNYMMNFSRQHGLRHFYNRRRRSLRRYP</sequence>